<keyword id="KW-0002">3D-structure</keyword>
<keyword id="KW-0007">Acetylation</keyword>
<keyword id="KW-0067">ATP-binding</keyword>
<keyword id="KW-0131">Cell cycle</keyword>
<keyword id="KW-0158">Chromosome</keyword>
<keyword id="KW-0209">Deafness</keyword>
<keyword id="KW-0225">Disease variant</keyword>
<keyword id="KW-0235">DNA replication</keyword>
<keyword id="KW-0238">DNA-binding</keyword>
<keyword id="KW-0347">Helicase</keyword>
<keyword id="KW-0378">Hydrolase</keyword>
<keyword id="KW-1017">Isopeptide bond</keyword>
<keyword id="KW-0479">Metal-binding</keyword>
<keyword id="KW-1010">Non-syndromic deafness</keyword>
<keyword id="KW-0547">Nucleotide-binding</keyword>
<keyword id="KW-0539">Nucleus</keyword>
<keyword id="KW-0597">Phosphoprotein</keyword>
<keyword id="KW-1267">Proteomics identification</keyword>
<keyword id="KW-1185">Reference proteome</keyword>
<keyword id="KW-0832">Ubl conjugation</keyword>
<keyword id="KW-0862">Zinc</keyword>
<keyword id="KW-0863">Zinc-finger</keyword>
<reference key="1">
    <citation type="journal article" date="1994" name="J. Cell Sci.">
        <title>A human nuclear protein with sequence homology to a family of early S phase proteins is required for entry into S phase and for cell division.</title>
        <authorList>
            <person name="Todorov I.T."/>
            <person name="Pepperkok R."/>
            <person name="Philipova R.N."/>
            <person name="Kearsey S.E."/>
            <person name="Ansorge W."/>
            <person name="Werner D."/>
        </authorList>
    </citation>
    <scope>NUCLEOTIDE SEQUENCE [MRNA]</scope>
    <scope>FUNCTION</scope>
    <scope>SUBCELLULAR LOCATION</scope>
    <scope>VARIANT GLN-166</scope>
    <source>
        <tissue>Colon carcinoma</tissue>
    </source>
</reference>
<reference key="2">
    <citation type="journal article" date="1994" name="DNA Res.">
        <title>Prediction of the coding sequences of unidentified human genes. I. The coding sequences of 40 new genes (KIAA0001-KIAA0040) deduced by analysis of randomly sampled cDNA clones from human immature myeloid cell line KG-1.</title>
        <authorList>
            <person name="Nomura N."/>
            <person name="Miyajima N."/>
            <person name="Sazuka T."/>
            <person name="Tanaka A."/>
            <person name="Kawarabayasi Y."/>
            <person name="Sato S."/>
            <person name="Nagase T."/>
            <person name="Seki N."/>
            <person name="Ishikawa K."/>
            <person name="Tabata S."/>
        </authorList>
    </citation>
    <scope>NUCLEOTIDE SEQUENCE [LARGE SCALE MRNA]</scope>
    <source>
        <tissue>Bone marrow</tissue>
    </source>
</reference>
<reference key="3">
    <citation type="submission" date="2004-07" db="EMBL/GenBank/DDBJ databases">
        <authorList>
            <consortium name="NIEHS SNPs program"/>
        </authorList>
    </citation>
    <scope>NUCLEOTIDE SEQUENCE [GENOMIC DNA]</scope>
    <scope>VARIANTS GLU-68; PHE-135; THR-396; MET-667 AND THR-727</scope>
</reference>
<reference key="4">
    <citation type="journal article" date="2004" name="Genome Res.">
        <title>The status, quality, and expansion of the NIH full-length cDNA project: the Mammalian Gene Collection (MGC).</title>
        <authorList>
            <consortium name="The MGC Project Team"/>
        </authorList>
    </citation>
    <scope>NUCLEOTIDE SEQUENCE [LARGE SCALE MRNA]</scope>
    <scope>VARIANTS ARG-501 AND THR-727</scope>
    <source>
        <tissue>Brain</tissue>
        <tissue>Lung</tissue>
        <tissue>Lymph</tissue>
        <tissue>Muscle</tissue>
        <tissue>Placenta</tissue>
        <tissue>Uterus</tissue>
    </source>
</reference>
<reference key="5">
    <citation type="submission" date="1996-03" db="EMBL/GenBank/DDBJ databases">
        <title>Homo sapiens DNA replication licensing factor (huMCM2).</title>
        <authorList>
            <person name="Mimura S."/>
            <person name="Nishimoto S."/>
            <person name="Kubota Y."/>
            <person name="Takisawa H."/>
            <person name="Nojima H."/>
        </authorList>
    </citation>
    <scope>NUCLEOTIDE SEQUENCE [MRNA] OF 2-904</scope>
    <source>
        <tissue>Cervix carcinoma</tissue>
    </source>
</reference>
<reference key="6">
    <citation type="submission" date="2003-08" db="EMBL/GenBank/DDBJ databases">
        <title>Cloning of human full-length CDSs in BD Creator(TM) system donor vector.</title>
        <authorList>
            <person name="Kalnine N."/>
            <person name="Chen X."/>
            <person name="Rolfs A."/>
            <person name="Halleck A."/>
            <person name="Hines L."/>
            <person name="Eisenstein S."/>
            <person name="Koundinya M."/>
            <person name="Raphael J."/>
            <person name="Moreira D."/>
            <person name="Kelley T."/>
            <person name="LaBaer J."/>
            <person name="Lin Y."/>
            <person name="Phelan M."/>
            <person name="Farmer A."/>
        </authorList>
    </citation>
    <scope>NUCLEOTIDE SEQUENCE [LARGE SCALE MRNA] OF 10-904</scope>
</reference>
<reference key="7">
    <citation type="journal article" date="1994" name="Cytogenet. Cell Genet.">
        <title>The human gene for nuclear protein BM28 (CDCL1), a new member of the early S-phase family of proteins, maps to chromosome band 3q21.</title>
        <authorList>
            <person name="Mincheva A."/>
            <person name="Todorov I.T."/>
            <person name="Werner D."/>
            <person name="Fink T.M."/>
            <person name="Lichter P."/>
        </authorList>
    </citation>
    <scope>CHROMOSOMAL LOCATION</scope>
</reference>
<reference key="8">
    <citation type="journal article" date="1997" name="J. Biol. Chem.">
        <title>A DNA helicase activity is associated with an MCM4, -6, and -7 protein complex.</title>
        <authorList>
            <person name="Ishimi Y."/>
        </authorList>
    </citation>
    <scope>IDENTIFICATION IN THE MCM2-7 COMPLEX</scope>
</reference>
<reference key="9">
    <citation type="journal article" date="2000" name="Nucleic Acids Res.">
        <title>The human homolog of Saccharomyces cerevisiae Mcm10 interacts with replication factors and dissociates from nuclease-resistant nuclear structures in G(2) phase.</title>
        <authorList>
            <person name="Izumi M."/>
            <person name="Yanagi K."/>
            <person name="Mizuno T."/>
            <person name="Yokoi M."/>
            <person name="Kawasaki Y."/>
            <person name="Moon K.Y."/>
            <person name="Hurwitz J."/>
            <person name="Yatagai F."/>
            <person name="Hanaoka F."/>
        </authorList>
    </citation>
    <scope>INTERACTION WITH MCM10</scope>
</reference>
<reference key="10">
    <citation type="journal article" date="2004" name="Proc. Natl. Acad. Sci. U.S.A.">
        <title>Minichromosome maintenance proteins are direct targets of the ATM and ATR checkpoint kinases.</title>
        <authorList>
            <person name="Cortez D."/>
            <person name="Glick G."/>
            <person name="Elledge S.J."/>
        </authorList>
    </citation>
    <scope>PHOSPHORYLATION AT SER-108</scope>
    <scope>MUTAGENESIS OF SER-108</scope>
</reference>
<reference key="11">
    <citation type="journal article" date="2006" name="Cell">
        <title>Global, in vivo, and site-specific phosphorylation dynamics in signaling networks.</title>
        <authorList>
            <person name="Olsen J.V."/>
            <person name="Blagoev B."/>
            <person name="Gnad F."/>
            <person name="Macek B."/>
            <person name="Kumar C."/>
            <person name="Mortensen P."/>
            <person name="Mann M."/>
        </authorList>
    </citation>
    <scope>IDENTIFICATION BY MASS SPECTROMETRY [LARGE SCALE ANALYSIS]</scope>
    <source>
        <tissue>Cervix carcinoma</tissue>
    </source>
</reference>
<reference key="12">
    <citation type="journal article" date="2006" name="Mol. Biol. Cell">
        <title>Essential role of phosphorylation of MCM2 by Cdc7/Dbf4 in the initiation of DNA replication in mammalian cells.</title>
        <authorList>
            <person name="Tsuji T."/>
            <person name="Ficarro S.B."/>
            <person name="Jiang W."/>
        </authorList>
    </citation>
    <scope>PHOSPHORYLATION AT SER-27; SER-41; SER-53; SER-108 AND SER-139</scope>
    <scope>MUTAGENESIS OF SER-27; SER-41 AND SER-139</scope>
    <scope>IDENTIFICATION IN THE MCM2-7 COMPLEX</scope>
    <scope>ATPASE ACTIVITY OF THE MCM2-7 COMPLEX</scope>
</reference>
<reference key="13">
    <citation type="journal article" date="2006" name="Mol. Cell">
        <title>ING tumor suppressor proteins are critical regulators of chromatin acetylation required for genome expression and perpetuation.</title>
        <authorList>
            <person name="Doyon Y."/>
            <person name="Cayrou C."/>
            <person name="Ullah M."/>
            <person name="Landry A.-J."/>
            <person name="Cote V."/>
            <person name="Selleck W."/>
            <person name="Lane W.S."/>
            <person name="Tan S."/>
            <person name="Yang X.-J."/>
            <person name="Cote J."/>
        </authorList>
    </citation>
    <scope>INTERACTION WITH KAT7</scope>
</reference>
<reference key="14">
    <citation type="journal article" date="2006" name="Nat. Biotechnol.">
        <title>A probability-based approach for high-throughput protein phosphorylation analysis and site localization.</title>
        <authorList>
            <person name="Beausoleil S.A."/>
            <person name="Villen J."/>
            <person name="Gerber S.A."/>
            <person name="Rush J."/>
            <person name="Gygi S.P."/>
        </authorList>
    </citation>
    <scope>PHOSPHORYLATION [LARGE SCALE ANALYSIS] AT SER-27 AND SER-41</scope>
    <scope>IDENTIFICATION BY MASS SPECTROMETRY [LARGE SCALE ANALYSIS]</scope>
    <source>
        <tissue>Cervix carcinoma</tissue>
    </source>
</reference>
<reference key="15">
    <citation type="journal article" date="2007" name="Electrophoresis">
        <title>Toward a global characterization of the phosphoproteome in prostate cancer cells: identification of phosphoproteins in the LNCaP cell line.</title>
        <authorList>
            <person name="Giorgianni F."/>
            <person name="Zhao Y."/>
            <person name="Desiderio D.M."/>
            <person name="Beranova-Giorgianni S."/>
        </authorList>
    </citation>
    <scope>IDENTIFICATION BY MASS SPECTROMETRY [LARGE SCALE ANALYSIS]</scope>
    <source>
        <tissue>Prostate cancer</tissue>
    </source>
</reference>
<reference key="16">
    <citation type="journal article" date="2007" name="J. Biol. Chem.">
        <title>Cdc7 is an active kinase in human cancer cells undergoing replication stress.</title>
        <authorList>
            <person name="Tenca P."/>
            <person name="Brotherton D."/>
            <person name="Montagnoli A."/>
            <person name="Rainoldi S."/>
            <person name="Albanese C."/>
            <person name="Santocanale C."/>
        </authorList>
    </citation>
    <scope>PHOSPHORYLATION AT SER-40 AND SER-53</scope>
</reference>
<reference key="17">
    <citation type="journal article" date="2007" name="Mol. Cell. Biol.">
        <title>Identification and characterization of a novel component of the human minichromosome maintenance complex.</title>
        <authorList>
            <person name="Sakwe A.M."/>
            <person name="Nguyen T."/>
            <person name="Athanasopoulos V."/>
            <person name="Shire K."/>
            <person name="Frappier L."/>
        </authorList>
    </citation>
    <scope>IDENTIFICATION IN THE MCM2-7 COMPLEX</scope>
    <scope>IDENTIFICATION BY MASS SPECTROMETRY</scope>
</reference>
<reference key="18">
    <citation type="journal article" date="2007" name="Science">
        <title>ATM and ATR substrate analysis reveals extensive protein networks responsive to DNA damage.</title>
        <authorList>
            <person name="Matsuoka S."/>
            <person name="Ballif B.A."/>
            <person name="Smogorzewska A."/>
            <person name="McDonald E.R. III"/>
            <person name="Hurov K.E."/>
            <person name="Luo J."/>
            <person name="Bakalarski C.E."/>
            <person name="Zhao Z."/>
            <person name="Solimini N."/>
            <person name="Lerenthal Y."/>
            <person name="Shiloh Y."/>
            <person name="Gygi S.P."/>
            <person name="Elledge S.J."/>
        </authorList>
    </citation>
    <scope>PHOSPHORYLATION [LARGE SCALE ANALYSIS] AT SER-108</scope>
    <scope>IDENTIFICATION BY MASS SPECTROMETRY [LARGE SCALE ANALYSIS]</scope>
    <source>
        <tissue>Embryonic kidney</tissue>
    </source>
</reference>
<reference key="19">
    <citation type="journal article" date="2008" name="J. Proteome Res.">
        <title>Combining protein-based IMAC, peptide-based IMAC, and MudPIT for efficient phosphoproteomic analysis.</title>
        <authorList>
            <person name="Cantin G.T."/>
            <person name="Yi W."/>
            <person name="Lu B."/>
            <person name="Park S.K."/>
            <person name="Xu T."/>
            <person name="Lee J.-D."/>
            <person name="Yates J.R. III"/>
        </authorList>
    </citation>
    <scope>IDENTIFICATION BY MASS SPECTROMETRY [LARGE SCALE ANALYSIS]</scope>
    <source>
        <tissue>Cervix carcinoma</tissue>
    </source>
</reference>
<reference key="20">
    <citation type="journal article" date="2008" name="J. Proteome Res.">
        <title>Phosphorylation analysis of primary human T lymphocytes using sequential IMAC and titanium oxide enrichment.</title>
        <authorList>
            <person name="Carrascal M."/>
            <person name="Ovelleiro D."/>
            <person name="Casas V."/>
            <person name="Gay M."/>
            <person name="Abian J."/>
        </authorList>
    </citation>
    <scope>IDENTIFICATION BY MASS SPECTROMETRY [LARGE SCALE ANALYSIS]</scope>
    <source>
        <tissue>T-cell</tissue>
    </source>
</reference>
<reference key="21">
    <citation type="journal article" date="2008" name="Mol. Cell">
        <title>Kinase-selective enrichment enables quantitative phosphoproteomics of the kinome across the cell cycle.</title>
        <authorList>
            <person name="Daub H."/>
            <person name="Olsen J.V."/>
            <person name="Bairlein M."/>
            <person name="Gnad F."/>
            <person name="Oppermann F.S."/>
            <person name="Korner R."/>
            <person name="Greff Z."/>
            <person name="Keri G."/>
            <person name="Stemmann O."/>
            <person name="Mann M."/>
        </authorList>
    </citation>
    <scope>IDENTIFICATION BY MASS SPECTROMETRY [LARGE SCALE ANALYSIS]</scope>
    <source>
        <tissue>Cervix carcinoma</tissue>
    </source>
</reference>
<reference key="22">
    <citation type="journal article" date="2008" name="Proc. Natl. Acad. Sci. U.S.A.">
        <title>A quantitative atlas of mitotic phosphorylation.</title>
        <authorList>
            <person name="Dephoure N."/>
            <person name="Zhou C."/>
            <person name="Villen J."/>
            <person name="Beausoleil S.A."/>
            <person name="Bakalarski C.E."/>
            <person name="Elledge S.J."/>
            <person name="Gygi S.P."/>
        </authorList>
    </citation>
    <scope>PHOSPHORYLATION [LARGE SCALE ANALYSIS] AT SER-26; THR-39; SER-40; SER-41; SER-53 AND SER-139</scope>
    <scope>IDENTIFICATION BY MASS SPECTROMETRY [LARGE SCALE ANALYSIS]</scope>
    <source>
        <tissue>Cervix carcinoma</tissue>
    </source>
</reference>
<reference key="23">
    <citation type="journal article" date="2009" name="Anal. Chem.">
        <title>Lys-N and trypsin cover complementary parts of the phosphoproteome in a refined SCX-based approach.</title>
        <authorList>
            <person name="Gauci S."/>
            <person name="Helbig A.O."/>
            <person name="Slijper M."/>
            <person name="Krijgsveld J."/>
            <person name="Heck A.J."/>
            <person name="Mohammed S."/>
        </authorList>
    </citation>
    <scope>ACETYLATION [LARGE SCALE ANALYSIS] AT ALA-2</scope>
    <scope>CLEAVAGE OF INITIATOR METHIONINE [LARGE SCALE ANALYSIS]</scope>
    <scope>IDENTIFICATION BY MASS SPECTROMETRY [LARGE SCALE ANALYSIS]</scope>
</reference>
<reference key="24">
    <citation type="journal article" date="2009" name="Sci. Signal.">
        <title>Quantitative phosphoproteomic analysis of T cell receptor signaling reveals system-wide modulation of protein-protein interactions.</title>
        <authorList>
            <person name="Mayya V."/>
            <person name="Lundgren D.H."/>
            <person name="Hwang S.-I."/>
            <person name="Rezaul K."/>
            <person name="Wu L."/>
            <person name="Eng J.K."/>
            <person name="Rodionov V."/>
            <person name="Han D.K."/>
        </authorList>
    </citation>
    <scope>PHOSPHORYLATION [LARGE SCALE ANALYSIS] AT SER-27; THR-59; SER-108 AND SER-139</scope>
    <scope>IDENTIFICATION BY MASS SPECTROMETRY [LARGE SCALE ANALYSIS]</scope>
    <source>
        <tissue>Leukemic T-cell</tissue>
    </source>
</reference>
<reference key="25">
    <citation type="journal article" date="2009" name="Science">
        <title>Lysine acetylation targets protein complexes and co-regulates major cellular functions.</title>
        <authorList>
            <person name="Choudhary C."/>
            <person name="Kumar C."/>
            <person name="Gnad F."/>
            <person name="Nielsen M.L."/>
            <person name="Rehman M."/>
            <person name="Walther T.C."/>
            <person name="Olsen J.V."/>
            <person name="Mann M."/>
        </authorList>
    </citation>
    <scope>ACETYLATION [LARGE SCALE ANALYSIS] AT LYS-216</scope>
    <scope>IDENTIFICATION BY MASS SPECTROMETRY [LARGE SCALE ANALYSIS]</scope>
</reference>
<reference key="26">
    <citation type="journal article" date="2010" name="Sci. Signal.">
        <title>Quantitative phosphoproteomics reveals widespread full phosphorylation site occupancy during mitosis.</title>
        <authorList>
            <person name="Olsen J.V."/>
            <person name="Vermeulen M."/>
            <person name="Santamaria A."/>
            <person name="Kumar C."/>
            <person name="Miller M.L."/>
            <person name="Jensen L.J."/>
            <person name="Gnad F."/>
            <person name="Cox J."/>
            <person name="Jensen T.S."/>
            <person name="Nigg E.A."/>
            <person name="Brunak S."/>
            <person name="Mann M."/>
        </authorList>
    </citation>
    <scope>ACETYLATION [LARGE SCALE ANALYSIS] AT ALA-2</scope>
    <scope>PHOSPHORYLATION [LARGE SCALE ANALYSIS] AT SER-13; SER-27; SER-41; SER-108 AND SER-139</scope>
    <scope>CLEAVAGE OF INITIATOR METHIONINE [LARGE SCALE ANALYSIS]</scope>
    <scope>IDENTIFICATION BY MASS SPECTROMETRY [LARGE SCALE ANALYSIS]</scope>
    <source>
        <tissue>Cervix carcinoma</tissue>
    </source>
</reference>
<reference key="27">
    <citation type="journal article" date="2011" name="BMC Syst. Biol.">
        <title>Initial characterization of the human central proteome.</title>
        <authorList>
            <person name="Burkard T.R."/>
            <person name="Planyavsky M."/>
            <person name="Kaupe I."/>
            <person name="Breitwieser F.P."/>
            <person name="Buerckstuemmer T."/>
            <person name="Bennett K.L."/>
            <person name="Superti-Furga G."/>
            <person name="Colinge J."/>
        </authorList>
    </citation>
    <scope>IDENTIFICATION BY MASS SPECTROMETRY [LARGE SCALE ANALYSIS]</scope>
</reference>
<reference key="28">
    <citation type="journal article" date="2011" name="Sci. Signal.">
        <title>System-wide temporal characterization of the proteome and phosphoproteome of human embryonic stem cell differentiation.</title>
        <authorList>
            <person name="Rigbolt K.T."/>
            <person name="Prokhorova T.A."/>
            <person name="Akimov V."/>
            <person name="Henningsen J."/>
            <person name="Johansen P.T."/>
            <person name="Kratchmarova I."/>
            <person name="Kassem M."/>
            <person name="Mann M."/>
            <person name="Olsen J.V."/>
            <person name="Blagoev B."/>
        </authorList>
    </citation>
    <scope>ACETYLATION [LARGE SCALE ANALYSIS] AT ALA-2</scope>
    <scope>PHOSPHORYLATION [LARGE SCALE ANALYSIS] AT SER-13; SER-26; SER-27; SER-41; SER-139 AND SER-381</scope>
    <scope>CLEAVAGE OF INITIATOR METHIONINE [LARGE SCALE ANALYSIS]</scope>
    <scope>IDENTIFICATION BY MASS SPECTROMETRY [LARGE SCALE ANALYSIS]</scope>
</reference>
<reference key="29">
    <citation type="journal article" date="2012" name="Mol. Cell. Proteomics">
        <title>Comparative large-scale characterisation of plant vs. mammal proteins reveals similar and idiosyncratic N-alpha acetylation features.</title>
        <authorList>
            <person name="Bienvenut W.V."/>
            <person name="Sumpton D."/>
            <person name="Martinez A."/>
            <person name="Lilla S."/>
            <person name="Espagne C."/>
            <person name="Meinnel T."/>
            <person name="Giglione C."/>
        </authorList>
    </citation>
    <scope>ACETYLATION [LARGE SCALE ANALYSIS] AT ALA-2</scope>
    <scope>CLEAVAGE OF INITIATOR METHIONINE [LARGE SCALE ANALYSIS]</scope>
    <scope>IDENTIFICATION BY MASS SPECTROMETRY [LARGE SCALE ANALYSIS]</scope>
</reference>
<reference key="30">
    <citation type="journal article" date="2012" name="Proc. Natl. Acad. Sci. U.S.A.">
        <title>N-terminal acetylome analyses and functional insights of the N-terminal acetyltransferase NatB.</title>
        <authorList>
            <person name="Van Damme P."/>
            <person name="Lasa M."/>
            <person name="Polevoda B."/>
            <person name="Gazquez C."/>
            <person name="Elosegui-Artola A."/>
            <person name="Kim D.S."/>
            <person name="De Juan-Pardo E."/>
            <person name="Demeyer K."/>
            <person name="Hole K."/>
            <person name="Larrea E."/>
            <person name="Timmerman E."/>
            <person name="Prieto J."/>
            <person name="Arnesen T."/>
            <person name="Sherman F."/>
            <person name="Gevaert K."/>
            <person name="Aldabe R."/>
        </authorList>
    </citation>
    <scope>ACETYLATION [LARGE SCALE ANALYSIS] AT ALA-2</scope>
    <scope>CLEAVAGE OF INITIATOR METHIONINE [LARGE SCALE ANALYSIS]</scope>
    <scope>IDENTIFICATION BY MASS SPECTROMETRY [LARGE SCALE ANALYSIS]</scope>
</reference>
<reference key="31">
    <citation type="journal article" date="2013" name="J. Proteome Res.">
        <title>Toward a comprehensive characterization of a human cancer cell phosphoproteome.</title>
        <authorList>
            <person name="Zhou H."/>
            <person name="Di Palma S."/>
            <person name="Preisinger C."/>
            <person name="Peng M."/>
            <person name="Polat A.N."/>
            <person name="Heck A.J."/>
            <person name="Mohammed S."/>
        </authorList>
    </citation>
    <scope>PHOSPHORYLATION [LARGE SCALE ANALYSIS] AT SER-13; THR-25; SER-26; SER-27; SER-32; SER-40; SER-41; SER-139 AND SER-484</scope>
    <scope>IDENTIFICATION BY MASS SPECTROMETRY [LARGE SCALE ANALYSIS]</scope>
    <source>
        <tissue>Cervix carcinoma</tissue>
        <tissue>Erythroleukemia</tissue>
    </source>
</reference>
<reference key="32">
    <citation type="journal article" date="2014" name="J. Proteomics">
        <title>An enzyme assisted RP-RPLC approach for in-depth analysis of human liver phosphoproteome.</title>
        <authorList>
            <person name="Bian Y."/>
            <person name="Song C."/>
            <person name="Cheng K."/>
            <person name="Dong M."/>
            <person name="Wang F."/>
            <person name="Huang J."/>
            <person name="Sun D."/>
            <person name="Wang L."/>
            <person name="Ye M."/>
            <person name="Zou H."/>
        </authorList>
    </citation>
    <scope>PHOSPHORYLATION [LARGE SCALE ANALYSIS] AT SER-13; SER-27; TYR-137 AND SER-139</scope>
    <scope>IDENTIFICATION BY MASS SPECTROMETRY [LARGE SCALE ANALYSIS]</scope>
    <source>
        <tissue>Liver</tissue>
    </source>
</reference>
<reference key="33">
    <citation type="journal article" date="2016" name="Nat. Commun.">
        <title>Claspin recruits Cdc7 kinase for initiation of DNA replication in human cells.</title>
        <authorList>
            <person name="Yang C.C."/>
            <person name="Suzuki M."/>
            <person name="Yamakawa S."/>
            <person name="Uno S."/>
            <person name="Ishii A."/>
            <person name="Yamazaki S."/>
            <person name="Fukatsu R."/>
            <person name="Fujisawa R."/>
            <person name="Sakimura K."/>
            <person name="Tsurimoto T."/>
            <person name="Masai H."/>
        </authorList>
    </citation>
    <scope>PHOSPHORYLATION AT SER-53</scope>
</reference>
<reference key="34">
    <citation type="journal article" date="2017" name="Nat. Genet.">
        <title>Mutations in DONSON disrupt replication fork stability and cause microcephalic dwarfism.</title>
        <authorList>
            <person name="Reynolds J.J."/>
            <person name="Bicknell L.S."/>
            <person name="Carroll P."/>
            <person name="Higgs M.R."/>
            <person name="Shaheen R."/>
            <person name="Murray J.E."/>
            <person name="Papadopoulos D.K."/>
            <person name="Leitch A."/>
            <person name="Murina O."/>
            <person name="Tarnauskaite Z."/>
            <person name="Wessel S.R."/>
            <person name="Zlatanou A."/>
            <person name="Vernet A."/>
            <person name="von Kriegsheim A."/>
            <person name="Mottram R.M."/>
            <person name="Logan C.V."/>
            <person name="Bye H."/>
            <person name="Li Y."/>
            <person name="Brean A."/>
            <person name="Maddirevula S."/>
            <person name="Challis R.C."/>
            <person name="Skouloudaki K."/>
            <person name="Almoisheer A."/>
            <person name="Alsaif H.S."/>
            <person name="Amar A."/>
            <person name="Prescott N.J."/>
            <person name="Bober M.B."/>
            <person name="Duker A."/>
            <person name="Faqeih E."/>
            <person name="Seidahmed M.Z."/>
            <person name="Al Tala S."/>
            <person name="Alswaid A."/>
            <person name="Ahmed S."/>
            <person name="Al-Aama J.Y."/>
            <person name="Altmueller J."/>
            <person name="Al Balwi M."/>
            <person name="Brady A.F."/>
            <person name="Chessa L."/>
            <person name="Cox H."/>
            <person name="Fischetto R."/>
            <person name="Heller R."/>
            <person name="Henderson B.D."/>
            <person name="Hobson E."/>
            <person name="Nuernberg P."/>
            <person name="Percin E.F."/>
            <person name="Peron A."/>
            <person name="Spaccini L."/>
            <person name="Quigley A.J."/>
            <person name="Thakur S."/>
            <person name="Wise C.A."/>
            <person name="Yoon G."/>
            <person name="Alnemer M."/>
            <person name="Tomancak P."/>
            <person name="Yigit G."/>
            <person name="Taylor A.M."/>
            <person name="Reijns M.A."/>
            <person name="Simpson M.A."/>
            <person name="Cortez D."/>
            <person name="Alkuraya F.S."/>
            <person name="Mathew C.G."/>
            <person name="Jackson A.P."/>
            <person name="Stewart G.S."/>
        </authorList>
    </citation>
    <scope>INTERACTION WITH DONSON</scope>
</reference>
<reference key="35">
    <citation type="journal article" date="2017" name="Nat. Struct. Mol. Biol.">
        <title>Site-specific mapping of the human SUMO proteome reveals co-modification with phosphorylation.</title>
        <authorList>
            <person name="Hendriks I.A."/>
            <person name="Lyon D."/>
            <person name="Young C."/>
            <person name="Jensen L.J."/>
            <person name="Vertegaal A.C."/>
            <person name="Nielsen M.L."/>
        </authorList>
    </citation>
    <scope>SUMOYLATION [LARGE SCALE ANALYSIS] AT LYS-178</scope>
    <scope>IDENTIFICATION BY MASS SPECTROMETRY [LARGE SCALE ANALYSIS]</scope>
</reference>
<reference key="36">
    <citation type="journal article" date="2022" name="Nature">
        <title>Fast and efficient DNA replication with purified human proteins.</title>
        <authorList>
            <person name="Baris Y."/>
            <person name="Taylor M.R.G."/>
            <person name="Aria V."/>
            <person name="Yeeles J.T.P."/>
        </authorList>
    </citation>
    <scope>FUNCTION</scope>
    <scope>SUBCELLULAR LOCATION</scope>
</reference>
<reference key="37">
    <citation type="journal article" date="2023" name="Nucleic Acids Res.">
        <title>The importance of nuclear RAGE-Mcm2 axis in diabetes or cancer-associated replication stress.</title>
        <authorList>
            <person name="Han Z."/>
            <person name="Andrs M."/>
            <person name="Madhavan B.K."/>
            <person name="Kaymak S."/>
            <person name="Sulaj A."/>
            <person name="Kender Z."/>
            <person name="Kopf S."/>
            <person name="Kihm L."/>
            <person name="Pepperkok R."/>
            <person name="Janscak P."/>
            <person name="Nawroth P."/>
            <person name="Kumar V."/>
        </authorList>
    </citation>
    <scope>INTERACTION WITH AGER</scope>
</reference>
<reference evidence="28 29" key="38">
    <citation type="journal article" date="2020" name="Nucleic Acids Res.">
        <title>CryoEM structures of human CMG-ATPgammaS-DNA and CMG-AND-1 complexes.</title>
        <authorList>
            <person name="Rzechorzek N.J."/>
            <person name="Hardwick S.W."/>
            <person name="Jatikusumo V.A."/>
            <person name="Chirgadze D.Y."/>
            <person name="Pellegrini L."/>
        </authorList>
    </citation>
    <scope>STRUCTURE BY ELECTRON MICROSCOPY (3.29 ANGSTROMS) IN COMPLEXES WITH ADP IN CMG COMPLEX</scope>
    <scope>SUBUNIT</scope>
    <scope>CATALYTIC ACTIVITY</scope>
    <scope>FUNCTION</scope>
</reference>
<reference evidence="30 31" key="39">
    <citation type="journal article" date="2021" name="Mol. Cell">
        <title>DNAJC9 integrates heat shock molecular chaperones into the histone chaperone network.</title>
        <authorList>
            <person name="Hammond C.M."/>
            <person name="Bao H."/>
            <person name="Hendriks I.A."/>
            <person name="Carraro M."/>
            <person name="Garcia-Nieto A."/>
            <person name="Liu Y."/>
            <person name="Reveron-Gomez N."/>
            <person name="Spanos C."/>
            <person name="Chen L."/>
            <person name="Rappsilber J."/>
            <person name="Nielsen M.L."/>
            <person name="Patel D.J."/>
            <person name="Huang H."/>
            <person name="Groth A."/>
        </authorList>
    </citation>
    <scope>X-RAY CRYSTALLOGRAPHY (2.5 ANGSTROMS) OF 61-130 IN COMPLEX WITH DNJC9 171-249 MUTANT CYS-243 AND HISTONES H3.3 58-136 AND H4</scope>
    <scope>IDENTIFICATION IN A CO-CHAPERONE COMPLEX WITH DNJC9 AND HISTONES H3.3 AND H4</scope>
    <scope>INTERACTION WITH DNJC9; H3.1 AND H3.3</scope>
    <scope>MUTAGENESIS OF 81-TYR--TYR-90</scope>
</reference>
<reference evidence="32" key="40">
    <citation type="journal article" date="2021" name="EMBO J.">
        <title>Structure of a human replisome shows the organisation and interactions of a DNA replication machine.</title>
        <authorList>
            <person name="Jones M.L."/>
            <person name="Baris Y."/>
            <person name="Taylor M.R.G."/>
            <person name="Yeeles J.T.P."/>
        </authorList>
    </citation>
    <scope>STRUCTURE BY ELECTRON MICROSCOPY (3.20 ANGSTROMS) IN REPLISOME</scope>
    <scope>SUBUNIT</scope>
    <scope>FUNCTION</scope>
</reference>
<reference evidence="33" key="41">
    <citation type="journal article" date="2021" name="Nature">
        <title>A conserved mechanism for regulating replisome disassembly in eukaryotes.</title>
        <authorList>
            <person name="Jenkyn-Bedford M."/>
            <person name="Jones M.L."/>
            <person name="Baris Y."/>
            <person name="Labib K.P.M."/>
            <person name="Cannone G."/>
            <person name="Yeeles J.T.P."/>
            <person name="Deegan T.D."/>
        </authorList>
    </citation>
    <scope>STRUCTURE BY ELECTRON MICROSCOPY (2.80 ANGSTROMS) IN REPLISOME</scope>
    <scope>SUBUNIT</scope>
    <scope>FUNCTION</scope>
</reference>
<reference key="42">
    <citation type="journal article" date="2015" name="PLoS ONE">
        <title>Whole exome sequencing identified MCM2 as a novel causative gene for autosomal dominant nonsyndromic deafness in a chinese family.</title>
        <authorList>
            <person name="Gao J."/>
            <person name="Wang Q."/>
            <person name="Dong C."/>
            <person name="Chen S."/>
            <person name="Qi Y."/>
            <person name="Liu Y."/>
        </authorList>
    </citation>
    <scope>INVOLVEMENT IN DFNA70</scope>
    <scope>VARIANT DFNA70 CYS-44</scope>
    <scope>CHARACTERIZATION OF VARIANT DFNA70 CYS-44</scope>
    <scope>FUNCTION</scope>
</reference>
<organism>
    <name type="scientific">Homo sapiens</name>
    <name type="common">Human</name>
    <dbReference type="NCBI Taxonomy" id="9606"/>
    <lineage>
        <taxon>Eukaryota</taxon>
        <taxon>Metazoa</taxon>
        <taxon>Chordata</taxon>
        <taxon>Craniata</taxon>
        <taxon>Vertebrata</taxon>
        <taxon>Euteleostomi</taxon>
        <taxon>Mammalia</taxon>
        <taxon>Eutheria</taxon>
        <taxon>Euarchontoglires</taxon>
        <taxon>Primates</taxon>
        <taxon>Haplorrhini</taxon>
        <taxon>Catarrhini</taxon>
        <taxon>Hominidae</taxon>
        <taxon>Homo</taxon>
    </lineage>
</organism>
<comment type="function">
    <text evidence="13 16 18 19 20 22">Acts as a component of the MCM2-7 complex (MCM complex) which is the replicative helicase essential for 'once per cell cycle' DNA replication initiation and elongation in eukaryotic cells. Core component of CDC45-MCM-GINS (CMG) helicase, the molecular machine that unwinds template DNA during replication, and around which the replisome is built (PubMed:32453425, PubMed:34694004, PubMed:34700328, PubMed:35585232). The active ATPase sites in the MCM2-7 ring are formed through the interaction surfaces of two neighboring subunits such that a critical structure of a conserved arginine finger motif is provided in trans relative to the ATP-binding site of the Walker A box of the adjacent subunit. The six ATPase active sites, however, are likely to contribute differentially to the complex helicase activity (PubMed:32453425). Required for the entry in S phase and for cell division (PubMed:8175912). Plays a role in terminally differentiated hair cells development of the cochlea and induces cells apoptosis (PubMed:26196677).</text>
</comment>
<comment type="catalytic activity">
    <reaction evidence="16">
        <text>ATP + H2O = ADP + phosphate + H(+)</text>
        <dbReference type="Rhea" id="RHEA:13065"/>
        <dbReference type="ChEBI" id="CHEBI:15377"/>
        <dbReference type="ChEBI" id="CHEBI:15378"/>
        <dbReference type="ChEBI" id="CHEBI:30616"/>
        <dbReference type="ChEBI" id="CHEBI:43474"/>
        <dbReference type="ChEBI" id="CHEBI:456216"/>
        <dbReference type="EC" id="3.6.4.12"/>
    </reaction>
    <physiologicalReaction direction="left-to-right" evidence="16">
        <dbReference type="Rhea" id="RHEA:13066"/>
    </physiologicalReaction>
</comment>
<comment type="subunit">
    <text evidence="2 3 6 9 10 12 15 16 17 18 19 21 23">Component of the MCM2-7 complex (PubMed:16899510, PubMed:17296731, PubMed:9305914). The complex forms a toroidal hexameric ring with the proposed subunit order MCM2-MCM6-MCM4-MCM7-MCM3-MCM5 (PubMed:16899510, PubMed:17296731, PubMed:32453425, PubMed:34694004, PubMed:34700328, PubMed:9305914). Component of the CMG helicase complex, a hexameric ring of related MCM2-7 subunits stabilized by CDC45 and the tetrameric GINS complex (PubMed:32453425, PubMed:34694004, PubMed:34700328). Interacts with DBF4 (By similarity). Interacts with KAT7 (PubMed:16387653). May interact with MCM10 (PubMed:11095689). Component of the replisome complex composed of at least DONSON, MCM2, MCM7, PCNA and TICRR (PubMed:28191891). Forms a co-chaperone complex with DNAJC9 and histone H3.3-H4 heterodimers (PubMed:33857403). Within the complex, interacts (via N-terminus) with DNAJC9 (via C-terminus); the interaction is histone-dependent (PubMed:33857403). Interacts with histones H3.1 and H3.3 (PubMed:33857403). Interacts with AGER/RAGE; the interaction is increased following DNA replication stress and stabilizes the MCM2-7 complex at replication forks (PubMed:36807739).</text>
</comment>
<comment type="interaction">
    <interactant intactId="EBI-374819">
        <id>P49736</id>
    </interactant>
    <interactant intactId="EBI-1237481">
        <id>O43823</id>
        <label>AKAP8</label>
    </interactant>
    <organismsDiffer>false</organismsDiffer>
    <experiments>7</experiments>
</comment>
<comment type="interaction">
    <interactant intactId="EBI-374819">
        <id>P49736</id>
    </interactant>
    <interactant intactId="EBI-749553">
        <id>Q9Y294</id>
        <label>ASF1A</label>
    </interactant>
    <organismsDiffer>false</organismsDiffer>
    <experiments>12</experiments>
</comment>
<comment type="interaction">
    <interactant intactId="EBI-374819">
        <id>P49736</id>
    </interactant>
    <interactant intactId="EBI-374969">
        <id>O75419</id>
        <label>CDC45</label>
    </interactant>
    <organismsDiffer>false</organismsDiffer>
    <experiments>2</experiments>
</comment>
<comment type="interaction">
    <interactant intactId="EBI-374819">
        <id>P49736</id>
    </interactant>
    <interactant intactId="EBI-1751979">
        <id>P49450</id>
        <label>CENPA</label>
    </interactant>
    <organismsDiffer>false</organismsDiffer>
    <experiments>3</experiments>
</comment>
<comment type="interaction">
    <interactant intactId="EBI-374819">
        <id>P49736</id>
    </interactant>
    <interactant intactId="EBI-32724208">
        <id>Q9NYP3</id>
        <label>DONSON</label>
    </interactant>
    <organismsDiffer>false</organismsDiffer>
    <experiments>10</experiments>
</comment>
<comment type="interaction">
    <interactant intactId="EBI-374819">
        <id>P49736</id>
    </interactant>
    <interactant intactId="EBI-3957237">
        <id>Q8IYD8</id>
        <label>FANCM</label>
    </interactant>
    <organismsDiffer>false</organismsDiffer>
    <experiments>5</experiments>
</comment>
<comment type="interaction">
    <interactant intactId="EBI-374819">
        <id>P49736</id>
    </interactant>
    <interactant intactId="EBI-2857315">
        <id>Q9BRX5</id>
        <label>GINS3</label>
    </interactant>
    <organismsDiffer>false</organismsDiffer>
    <experiments>2</experiments>
</comment>
<comment type="interaction">
    <interactant intactId="EBI-374819">
        <id>P49736</id>
    </interactant>
    <interactant intactId="EBI-79722">
        <id>P68431</id>
        <label>H3C12</label>
    </interactant>
    <organismsDiffer>false</organismsDiffer>
    <experiments>8</experiments>
</comment>
<comment type="interaction">
    <interactant intactId="EBI-374819">
        <id>P49736</id>
    </interactant>
    <interactant intactId="EBI-302023">
        <id>P62805</id>
        <label>H4C9</label>
    </interactant>
    <organismsDiffer>false</organismsDiffer>
    <experiments>9</experiments>
</comment>
<comment type="interaction">
    <interactant intactId="EBI-374819">
        <id>P49736</id>
    </interactant>
    <interactant intactId="EBI-1265089">
        <id>Q9Y468</id>
        <label>L3MBTL1</label>
    </interactant>
    <organismsDiffer>false</organismsDiffer>
    <experiments>3</experiments>
</comment>
<comment type="interaction">
    <interactant intactId="EBI-374819">
        <id>P49736</id>
    </interactant>
    <interactant intactId="EBI-355153">
        <id>P25205</id>
        <label>MCM3</label>
    </interactant>
    <organismsDiffer>false</organismsDiffer>
    <experiments>9</experiments>
</comment>
<comment type="interaction">
    <interactant intactId="EBI-374819">
        <id>P49736</id>
    </interactant>
    <interactant intactId="EBI-359410">
        <id>P33992</id>
        <label>MCM5</label>
    </interactant>
    <organismsDiffer>false</organismsDiffer>
    <experiments>5</experiments>
</comment>
<comment type="interaction">
    <interactant intactId="EBI-374819">
        <id>P49736</id>
    </interactant>
    <interactant intactId="EBI-374900">
        <id>Q14566</id>
        <label>MCM6</label>
    </interactant>
    <organismsDiffer>false</organismsDiffer>
    <experiments>18</experiments>
</comment>
<comment type="interaction">
    <interactant intactId="EBI-374819">
        <id>P49736</id>
    </interactant>
    <interactant intactId="EBI-355924">
        <id>P33993</id>
        <label>MCM7</label>
    </interactant>
    <organismsDiffer>false</organismsDiffer>
    <experiments>23</experiments>
</comment>
<comment type="interaction">
    <interactant intactId="EBI-374819">
        <id>P49736</id>
    </interactant>
    <interactant intactId="EBI-749378">
        <id>Q9BTE3</id>
        <label>MCMBP</label>
    </interactant>
    <organismsDiffer>false</organismsDiffer>
    <experiments>5</experiments>
</comment>
<comment type="interaction">
    <interactant intactId="EBI-374819">
        <id>P49736</id>
    </interactant>
    <interactant intactId="EBI-476768">
        <id>P53350</id>
        <label>PLK1</label>
    </interactant>
    <organismsDiffer>false</organismsDiffer>
    <experiments>2</experiments>
</comment>
<comment type="interaction">
    <interactant intactId="EBI-374819">
        <id>P49736</id>
    </interactant>
    <interactant intactId="EBI-747719">
        <id>Q96H20</id>
        <label>SNF8</label>
    </interactant>
    <organismsDiffer>false</organismsDiffer>
    <experiments>8</experiments>
</comment>
<comment type="interaction">
    <interactant intactId="EBI-374819">
        <id>P49736</id>
    </interactant>
    <interactant intactId="EBI-353771">
        <id>Q08945</id>
        <label>SSRP1</label>
    </interactant>
    <organismsDiffer>false</organismsDiffer>
    <experiments>6</experiments>
</comment>
<comment type="interaction">
    <interactant intactId="EBI-374819">
        <id>P49736</id>
    </interactant>
    <interactant intactId="EBI-750109">
        <id>Q9NYB0</id>
        <label>TERF2IP</label>
    </interactant>
    <organismsDiffer>false</organismsDiffer>
    <experiments>2</experiments>
</comment>
<comment type="subcellular location">
    <subcellularLocation>
        <location evidence="22">Nucleus</location>
    </subcellularLocation>
    <subcellularLocation>
        <location evidence="26">Chromosome</location>
    </subcellularLocation>
    <text evidence="2">Associated with chromatin before the formation of nuclei and detaches from it as DNA replication progresses.</text>
</comment>
<comment type="PTM">
    <text evidence="7 10 11">Phosphorylated on Ser-108 by ATR in proliferating cells. Ser-108 proliferation is increased by genotoxic agents. Ser-40 is mediated by the CDC7-DBF4 and CDC7-DBF4B complexes, while Ser-53 phosphorylation is only mediated by the CDC7-DBF4 complex. Phosphorylation by the CDC7-DBF4 complex during G1/S phase is required for the initiation of DNA replication.</text>
</comment>
<comment type="disease" evidence="13">
    <disease id="DI-04728">
        <name>Deafness, autosomal dominant, 70</name>
        <acronym>DFNA70</acronym>
        <description>A form of non-syndromic sensorineural hearing loss. Sensorineural deafness results from damage to the neural receptors of the inner ear, the nerve pathways to the brain, or the area of the brain that receives sound information. DFNA70 is characterized by slowly progressive, postlingual hearing impairment.</description>
        <dbReference type="MIM" id="616968"/>
    </disease>
    <text>The disease is caused by variants affecting the gene represented in this entry.</text>
</comment>
<comment type="miscellaneous">
    <text>Early fractionation of eukaryotic MCM proteins yielded a variety of dimeric, trimeric and tetrameric complexes with unclear biological significance. Specifically a MCM467 subcomplex is shown to have in vitro helicase activity which is inhibited by the MCM2 subunit. The MCM2-7 hexamer is the proposed physiological active complex.</text>
</comment>
<comment type="similarity">
    <text evidence="25">Belongs to the MCM family.</text>
</comment>
<comment type="sequence caution" evidence="25">
    <conflict type="erroneous initiation">
        <sequence resource="EMBL-CDS" id="BAA04642"/>
    </conflict>
    <text>Extended N-terminus.</text>
</comment>
<comment type="sequence caution" evidence="25">
    <conflict type="erroneous initiation">
        <sequence resource="EMBL-CDS" id="BAA12177"/>
    </conflict>
    <text>Truncated N-terminus.</text>
</comment>
<comment type="sequence caution" evidence="25">
    <conflict type="erroneous initiation">
        <sequence resource="EMBL-CDS" id="CAA47749"/>
    </conflict>
    <text>Extended N-terminus.</text>
</comment>
<comment type="sequence caution" evidence="25">
    <conflict type="frameshift">
        <sequence resource="EMBL-CDS" id="CAA47749"/>
    </conflict>
</comment>
<name>MCM2_HUMAN</name>
<proteinExistence type="evidence at protein level"/>
<evidence type="ECO:0000250" key="1"/>
<evidence type="ECO:0000250" key="2">
    <source>
        <dbReference type="UniProtKB" id="P55861"/>
    </source>
</evidence>
<evidence type="ECO:0000250" key="3">
    <source>
        <dbReference type="UniProtKB" id="P97310"/>
    </source>
</evidence>
<evidence type="ECO:0000255" key="4"/>
<evidence type="ECO:0000256" key="5">
    <source>
        <dbReference type="SAM" id="MobiDB-lite"/>
    </source>
</evidence>
<evidence type="ECO:0000269" key="6">
    <source>
    </source>
</evidence>
<evidence type="ECO:0000269" key="7">
    <source>
    </source>
</evidence>
<evidence type="ECO:0000269" key="8">
    <source>
    </source>
</evidence>
<evidence type="ECO:0000269" key="9">
    <source>
    </source>
</evidence>
<evidence type="ECO:0000269" key="10">
    <source>
    </source>
</evidence>
<evidence type="ECO:0000269" key="11">
    <source>
    </source>
</evidence>
<evidence type="ECO:0000269" key="12">
    <source>
    </source>
</evidence>
<evidence type="ECO:0000269" key="13">
    <source>
    </source>
</evidence>
<evidence type="ECO:0000269" key="14">
    <source>
    </source>
</evidence>
<evidence type="ECO:0000269" key="15">
    <source>
    </source>
</evidence>
<evidence type="ECO:0000269" key="16">
    <source>
    </source>
</evidence>
<evidence type="ECO:0000269" key="17">
    <source>
    </source>
</evidence>
<evidence type="ECO:0000269" key="18">
    <source>
    </source>
</evidence>
<evidence type="ECO:0000269" key="19">
    <source>
    </source>
</evidence>
<evidence type="ECO:0000269" key="20">
    <source>
    </source>
</evidence>
<evidence type="ECO:0000269" key="21">
    <source>
    </source>
</evidence>
<evidence type="ECO:0000269" key="22">
    <source>
    </source>
</evidence>
<evidence type="ECO:0000269" key="23">
    <source>
    </source>
</evidence>
<evidence type="ECO:0000269" key="24">
    <source ref="3"/>
</evidence>
<evidence type="ECO:0000305" key="25"/>
<evidence type="ECO:0000305" key="26">
    <source>
    </source>
</evidence>
<evidence type="ECO:0000312" key="27">
    <source>
        <dbReference type="HGNC" id="HGNC:6944"/>
    </source>
</evidence>
<evidence type="ECO:0007744" key="28">
    <source>
        <dbReference type="PDB" id="6XTX"/>
    </source>
</evidence>
<evidence type="ECO:0007744" key="29">
    <source>
        <dbReference type="PDB" id="6XTY"/>
    </source>
</evidence>
<evidence type="ECO:0007744" key="30">
    <source>
        <dbReference type="PDB" id="7CIZ"/>
    </source>
</evidence>
<evidence type="ECO:0007744" key="31">
    <source>
        <dbReference type="PDB" id="7CJ0"/>
    </source>
</evidence>
<evidence type="ECO:0007744" key="32">
    <source>
        <dbReference type="PDB" id="7PFO"/>
    </source>
</evidence>
<evidence type="ECO:0007744" key="33">
    <source>
        <dbReference type="PDB" id="7PLO"/>
    </source>
</evidence>
<evidence type="ECO:0007744" key="34">
    <source>
    </source>
</evidence>
<evidence type="ECO:0007744" key="35">
    <source>
    </source>
</evidence>
<evidence type="ECO:0007744" key="36">
    <source>
    </source>
</evidence>
<evidence type="ECO:0007744" key="37">
    <source>
    </source>
</evidence>
<evidence type="ECO:0007744" key="38">
    <source>
    </source>
</evidence>
<evidence type="ECO:0007744" key="39">
    <source>
    </source>
</evidence>
<evidence type="ECO:0007744" key="40">
    <source>
    </source>
</evidence>
<evidence type="ECO:0007744" key="41">
    <source>
    </source>
</evidence>
<evidence type="ECO:0007744" key="42">
    <source>
    </source>
</evidence>
<evidence type="ECO:0007744" key="43">
    <source>
    </source>
</evidence>
<evidence type="ECO:0007744" key="44">
    <source>
    </source>
</evidence>
<evidence type="ECO:0007744" key="45">
    <source>
    </source>
</evidence>
<evidence type="ECO:0007744" key="46">
    <source>
    </source>
</evidence>
<evidence type="ECO:0007829" key="47">
    <source>
        <dbReference type="PDB" id="5BO0"/>
    </source>
</evidence>
<evidence type="ECO:0007829" key="48">
    <source>
        <dbReference type="PDB" id="7CIZ"/>
    </source>
</evidence>
<evidence type="ECO:0007829" key="49">
    <source>
        <dbReference type="PDB" id="8S09"/>
    </source>
</evidence>
<feature type="initiator methionine" description="Removed" evidence="37 40 41 42 43">
    <location>
        <position position="1"/>
    </location>
</feature>
<feature type="chain" id="PRO_0000194087" description="DNA replication licensing factor MCM2">
    <location>
        <begin position="2"/>
        <end position="904"/>
    </location>
</feature>
<feature type="domain" description="MCM">
    <location>
        <begin position="473"/>
        <end position="679"/>
    </location>
</feature>
<feature type="zinc finger region" description="C4-type" evidence="4">
    <location>
        <begin position="329"/>
        <end position="355"/>
    </location>
</feature>
<feature type="region of interest" description="Disordered" evidence="5">
    <location>
        <begin position="1"/>
        <end position="80"/>
    </location>
</feature>
<feature type="region of interest" description="Interaction with KAT7" evidence="1">
    <location>
        <begin position="2"/>
        <end position="257"/>
    </location>
</feature>
<feature type="region of interest" description="Interaction with DNJC9" evidence="17">
    <location>
        <begin position="61"/>
        <end position="130"/>
    </location>
</feature>
<feature type="region of interest" description="Disordered" evidence="5">
    <location>
        <begin position="109"/>
        <end position="167"/>
    </location>
</feature>
<feature type="region of interest" description="Disordered" evidence="5">
    <location>
        <begin position="686"/>
        <end position="705"/>
    </location>
</feature>
<feature type="short sequence motif" description="Arginine finger">
    <location>
        <begin position="655"/>
        <end position="658"/>
    </location>
</feature>
<feature type="compositionally biased region" description="Polar residues" evidence="5">
    <location>
        <begin position="1"/>
        <end position="15"/>
    </location>
</feature>
<feature type="compositionally biased region" description="Acidic residues" evidence="5">
    <location>
        <begin position="62"/>
        <end position="73"/>
    </location>
</feature>
<feature type="compositionally biased region" description="Basic and acidic residues" evidence="5">
    <location>
        <begin position="111"/>
        <end position="125"/>
    </location>
</feature>
<feature type="binding site" evidence="16 28">
    <location>
        <position position="530"/>
    </location>
    <ligand>
        <name>ADP</name>
        <dbReference type="ChEBI" id="CHEBI:456216"/>
        <note>ligand shared with MCM6</note>
    </ligand>
</feature>
<feature type="binding site" evidence="16 28">
    <location>
        <position position="531"/>
    </location>
    <ligand>
        <name>ADP</name>
        <dbReference type="ChEBI" id="CHEBI:456216"/>
        <note>ligand shared with MCM6</note>
    </ligand>
</feature>
<feature type="modified residue" description="N-acetylalanine" evidence="37 40 41 42 43">
    <location>
        <position position="2"/>
    </location>
</feature>
<feature type="modified residue" description="Phosphoserine" evidence="3">
    <location>
        <position position="12"/>
    </location>
</feature>
<feature type="modified residue" description="Phosphoserine" evidence="40 41 44 45">
    <location>
        <position position="13"/>
    </location>
</feature>
<feature type="modified residue" description="Phosphothreonine" evidence="44">
    <location>
        <position position="25"/>
    </location>
</feature>
<feature type="modified residue" description="Phosphoserine" evidence="36 41 44">
    <location>
        <position position="26"/>
    </location>
</feature>
<feature type="modified residue" description="Phosphoserine" evidence="10 34 39 40 41 44 45">
    <location>
        <position position="27"/>
    </location>
</feature>
<feature type="modified residue" description="Phosphoserine" evidence="44">
    <location>
        <position position="32"/>
    </location>
</feature>
<feature type="modified residue" description="Phosphothreonine" evidence="36">
    <location>
        <position position="39"/>
    </location>
</feature>
<feature type="modified residue" description="Phosphoserine; by CDC7" evidence="11 36 44">
    <location>
        <position position="40"/>
    </location>
</feature>
<feature type="modified residue" description="Phosphoserine" evidence="10 34 36 40 41 44">
    <location>
        <position position="41"/>
    </location>
</feature>
<feature type="modified residue" description="Phosphoserine; by CDC7" evidence="10 11 14 36">
    <location>
        <position position="53"/>
    </location>
</feature>
<feature type="modified residue" description="Phosphothreonine" evidence="39">
    <location>
        <position position="59"/>
    </location>
</feature>
<feature type="modified residue" description="Phosphoserine; by ATR" evidence="7 10 35 39 40">
    <location>
        <position position="108"/>
    </location>
</feature>
<feature type="modified residue" description="Phosphotyrosine" evidence="45">
    <location>
        <position position="137"/>
    </location>
</feature>
<feature type="modified residue" description="Phosphoserine" evidence="10 36 39 40 41 44 45">
    <location>
        <position position="139"/>
    </location>
</feature>
<feature type="modified residue" description="N6-acetyllysine" evidence="38">
    <location>
        <position position="216"/>
    </location>
</feature>
<feature type="modified residue" description="Phosphoserine" evidence="41">
    <location>
        <position position="381"/>
    </location>
</feature>
<feature type="modified residue" description="Phosphoserine" evidence="44">
    <location>
        <position position="484"/>
    </location>
</feature>
<feature type="cross-link" description="Glycyl lysine isopeptide (Lys-Gly) (interchain with G-Cter in SUMO2)" evidence="46">
    <location>
        <position position="178"/>
    </location>
</feature>
<feature type="sequence variant" id="VAR_077049" description="In DFNA70; increases the apoptotic process; no effect on cell proliferation and cell cycle phase; dbSNP:rs375851208." evidence="13">
    <original>R</original>
    <variation>C</variation>
    <location>
        <position position="44"/>
    </location>
</feature>
<feature type="sequence variant" id="VAR_021111" description="In dbSNP:rs3087452." evidence="24">
    <original>D</original>
    <variation>E</variation>
    <location>
        <position position="68"/>
    </location>
</feature>
<feature type="sequence variant" id="VAR_021112" description="In dbSNP:rs2307314." evidence="24">
    <original>L</original>
    <variation>F</variation>
    <location>
        <position position="135"/>
    </location>
</feature>
<feature type="sequence variant" id="VAR_033298" description="In dbSNP:rs1048225." evidence="22">
    <original>E</original>
    <variation>Q</variation>
    <location>
        <position position="166"/>
    </location>
</feature>
<feature type="sequence variant" id="VAR_016137" description="In dbSNP:rs3087450." evidence="24">
    <original>A</original>
    <variation>T</variation>
    <location>
        <position position="396"/>
    </location>
</feature>
<feature type="sequence variant" id="VAR_033299" description="In dbSNP:rs13087457." evidence="8">
    <original>G</original>
    <variation>R</variation>
    <location>
        <position position="501"/>
    </location>
</feature>
<feature type="sequence variant" id="VAR_016138" description="In dbSNP:rs2307311." evidence="24">
    <original>V</original>
    <variation>M</variation>
    <location>
        <position position="667"/>
    </location>
</feature>
<feature type="sequence variant" id="VAR_016139" description="In dbSNP:rs2307313." evidence="8 24">
    <original>A</original>
    <variation>T</variation>
    <location>
        <position position="727"/>
    </location>
</feature>
<feature type="mutagenesis site" description="Impairs ATPase activity of the MCM-2-7 complex and reduces phosphorylation by the CDC7-DBF4 complex; when associated with A-41 and A-139." evidence="10">
    <original>S</original>
    <variation>A</variation>
    <location>
        <position position="27"/>
    </location>
</feature>
<feature type="mutagenesis site" description="Impairs ATPase activity of the MCM-2-7 complex and reduces phosphorylation by the CDC7-DBF4 complex; when associated with A-27 and A-139." evidence="10">
    <original>S</original>
    <variation>A</variation>
    <location>
        <position position="41"/>
    </location>
</feature>
<feature type="mutagenesis site" description="Loss of interaction with DNAJC9." evidence="17">
    <original>YRAIPELDAY</original>
    <variation>ARAIPELDAA</variation>
    <location>
        <begin position="81"/>
        <end position="90"/>
    </location>
</feature>
<feature type="mutagenesis site" description="Reduces phosphorylation by ATR." evidence="7">
    <original>S</original>
    <variation>A</variation>
    <location>
        <position position="108"/>
    </location>
</feature>
<feature type="mutagenesis site" description="Impairs ATPase activity of the MCM-2-7 complex and reduces phosphorylation by the CDC7-DBF4 complex; when associated with A-27 and A-41." evidence="10">
    <original>S</original>
    <variation>A</variation>
    <location>
        <position position="139"/>
    </location>
</feature>
<feature type="sequence conflict" description="In Ref. 1; CAA47749." evidence="25" ref="1">
    <original>M</original>
    <variation>S</variation>
    <location>
        <position position="1"/>
    </location>
</feature>
<feature type="sequence conflict" description="In Ref. 1; CAA47749." evidence="25" ref="1">
    <original>Q</original>
    <variation>R</variation>
    <location>
        <position position="109"/>
    </location>
</feature>
<feature type="sequence conflict" description="In Ref. 1; CAA47749." evidence="25" ref="1">
    <original>G</original>
    <variation>R</variation>
    <location>
        <position position="388"/>
    </location>
</feature>
<feature type="sequence conflict" description="In Ref. 1; CAA47749 and 5; BAA12177." evidence="25" ref="1 5">
    <original>KP</original>
    <variation>NA</variation>
    <location>
        <begin position="407"/>
        <end position="408"/>
    </location>
</feature>
<feature type="sequence conflict" description="In Ref. 1; CAA47749." evidence="25" ref="1">
    <original>L</original>
    <variation>P</variation>
    <location>
        <position position="495"/>
    </location>
</feature>
<feature type="sequence conflict" description="In Ref. 1; CAA47749." evidence="25" ref="1">
    <original>GL</original>
    <variation>AV</variation>
    <location>
        <begin position="555"/>
        <end position="556"/>
    </location>
</feature>
<feature type="strand" evidence="48">
    <location>
        <begin position="70"/>
        <end position="74"/>
    </location>
</feature>
<feature type="helix" evidence="48">
    <location>
        <begin position="77"/>
        <end position="81"/>
    </location>
</feature>
<feature type="turn" evidence="48">
    <location>
        <begin position="85"/>
        <end position="87"/>
    </location>
</feature>
<feature type="strand" evidence="47">
    <location>
        <begin position="98"/>
        <end position="100"/>
    </location>
</feature>
<feature type="helix" evidence="48">
    <location>
        <begin position="107"/>
        <end position="124"/>
    </location>
</feature>
<feature type="helix" evidence="49">
    <location>
        <begin position="182"/>
        <end position="187"/>
    </location>
</feature>
<feature type="helix" evidence="49">
    <location>
        <begin position="189"/>
        <end position="205"/>
    </location>
</feature>
<feature type="helix" evidence="49">
    <location>
        <begin position="214"/>
        <end position="223"/>
    </location>
</feature>
<feature type="turn" evidence="49">
    <location>
        <begin position="224"/>
        <end position="226"/>
    </location>
</feature>
<feature type="strand" evidence="49">
    <location>
        <begin position="229"/>
        <end position="232"/>
    </location>
</feature>
<feature type="helix" evidence="49">
    <location>
        <begin position="234"/>
        <end position="240"/>
    </location>
</feature>
<feature type="helix" evidence="49">
    <location>
        <begin position="242"/>
        <end position="247"/>
    </location>
</feature>
<feature type="turn" evidence="49">
    <location>
        <begin position="248"/>
        <end position="250"/>
    </location>
</feature>
<feature type="helix" evidence="49">
    <location>
        <begin position="252"/>
        <end position="270"/>
    </location>
</feature>
<feature type="helix" evidence="49">
    <location>
        <begin position="274"/>
        <end position="277"/>
    </location>
</feature>
<feature type="strand" evidence="49">
    <location>
        <begin position="282"/>
        <end position="285"/>
    </location>
</feature>
<feature type="turn" evidence="49">
    <location>
        <begin position="294"/>
        <end position="296"/>
    </location>
</feature>
<feature type="helix" evidence="49">
    <location>
        <begin position="299"/>
        <end position="301"/>
    </location>
</feature>
<feature type="strand" evidence="49">
    <location>
        <begin position="304"/>
        <end position="315"/>
    </location>
</feature>
<feature type="strand" evidence="49">
    <location>
        <begin position="319"/>
        <end position="332"/>
    </location>
</feature>
<feature type="strand" evidence="49">
    <location>
        <begin position="335"/>
        <end position="339"/>
    </location>
</feature>
<feature type="strand" evidence="49">
    <location>
        <begin position="343"/>
        <end position="345"/>
    </location>
</feature>
<feature type="turn" evidence="49">
    <location>
        <begin position="353"/>
        <end position="355"/>
    </location>
</feature>
<feature type="strand" evidence="49">
    <location>
        <begin position="361"/>
        <end position="363"/>
    </location>
</feature>
<feature type="turn" evidence="49">
    <location>
        <begin position="365"/>
        <end position="367"/>
    </location>
</feature>
<feature type="strand" evidence="49">
    <location>
        <begin position="369"/>
        <end position="379"/>
    </location>
</feature>
<feature type="strand" evidence="49">
    <location>
        <begin position="393"/>
        <end position="399"/>
    </location>
</feature>
<feature type="helix" evidence="49">
    <location>
        <begin position="400"/>
        <end position="402"/>
    </location>
</feature>
<feature type="strand" evidence="49">
    <location>
        <begin position="411"/>
        <end position="419"/>
    </location>
</feature>
<feature type="strand" evidence="49">
    <location>
        <begin position="429"/>
        <end position="432"/>
    </location>
</feature>
<feature type="strand" evidence="49">
    <location>
        <begin position="438"/>
        <end position="445"/>
    </location>
</feature>
<feature type="helix" evidence="49">
    <location>
        <begin position="459"/>
        <end position="469"/>
    </location>
</feature>
<feature type="helix" evidence="49">
    <location>
        <begin position="473"/>
        <end position="480"/>
    </location>
</feature>
<feature type="helix" evidence="49">
    <location>
        <begin position="489"/>
        <end position="500"/>
    </location>
</feature>
<feature type="turn" evidence="49">
    <location>
        <begin position="508"/>
        <end position="510"/>
    </location>
</feature>
<feature type="strand" evidence="49">
    <location>
        <begin position="519"/>
        <end position="523"/>
    </location>
</feature>
<feature type="helix" evidence="49">
    <location>
        <begin position="529"/>
        <end position="539"/>
    </location>
</feature>
<feature type="strand" evidence="49">
    <location>
        <begin position="541"/>
        <end position="550"/>
    </location>
</feature>
<feature type="strand" evidence="49">
    <location>
        <begin position="559"/>
        <end position="562"/>
    </location>
</feature>
<feature type="turn" evidence="49">
    <location>
        <begin position="564"/>
        <end position="566"/>
    </location>
</feature>
<feature type="strand" evidence="49">
    <location>
        <begin position="569"/>
        <end position="572"/>
    </location>
</feature>
<feature type="helix" evidence="49">
    <location>
        <begin position="575"/>
        <end position="578"/>
    </location>
</feature>
<feature type="strand" evidence="49">
    <location>
        <begin position="582"/>
        <end position="588"/>
    </location>
</feature>
<feature type="helix" evidence="49">
    <location>
        <begin position="589"/>
        <end position="591"/>
    </location>
</feature>
<feature type="helix" evidence="49">
    <location>
        <begin position="594"/>
        <end position="605"/>
    </location>
</feature>
<feature type="strand" evidence="49">
    <location>
        <begin position="606"/>
        <end position="613"/>
    </location>
</feature>
<feature type="strand" evidence="49">
    <location>
        <begin position="616"/>
        <end position="621"/>
    </location>
</feature>
<feature type="strand" evidence="49">
    <location>
        <begin position="624"/>
        <end position="630"/>
    </location>
</feature>
<feature type="strand" evidence="49">
    <location>
        <begin position="633"/>
        <end position="636"/>
    </location>
</feature>
<feature type="helix" evidence="49">
    <location>
        <begin position="643"/>
        <end position="646"/>
    </location>
</feature>
<feature type="strand" evidence="49">
    <location>
        <begin position="647"/>
        <end position="649"/>
    </location>
</feature>
<feature type="helix" evidence="49">
    <location>
        <begin position="651"/>
        <end position="656"/>
    </location>
</feature>
<feature type="strand" evidence="49">
    <location>
        <begin position="658"/>
        <end position="663"/>
    </location>
</feature>
<feature type="helix" evidence="49">
    <location>
        <begin position="669"/>
        <end position="685"/>
    </location>
</feature>
<feature type="helix" evidence="49">
    <location>
        <begin position="717"/>
        <end position="730"/>
    </location>
</feature>
<feature type="helix" evidence="49">
    <location>
        <begin position="740"/>
        <end position="757"/>
    </location>
</feature>
<feature type="helix" evidence="49">
    <location>
        <begin position="764"/>
        <end position="780"/>
    </location>
</feature>
<feature type="helix" evidence="49">
    <location>
        <begin position="788"/>
        <end position="804"/>
    </location>
</feature>
<feature type="helix" evidence="49">
    <location>
        <begin position="808"/>
        <end position="817"/>
    </location>
</feature>
<feature type="helix" evidence="49">
    <location>
        <begin position="819"/>
        <end position="822"/>
    </location>
</feature>
<feature type="turn" evidence="49">
    <location>
        <begin position="823"/>
        <end position="825"/>
    </location>
</feature>
<feature type="helix" evidence="49">
    <location>
        <begin position="828"/>
        <end position="851"/>
    </location>
</feature>
<feature type="strand" evidence="49">
    <location>
        <begin position="858"/>
        <end position="861"/>
    </location>
</feature>
<feature type="helix" evidence="49">
    <location>
        <begin position="862"/>
        <end position="871"/>
    </location>
</feature>
<feature type="helix" evidence="49">
    <location>
        <begin position="878"/>
        <end position="882"/>
    </location>
</feature>
<feature type="helix" evidence="49">
    <location>
        <begin position="884"/>
        <end position="888"/>
    </location>
</feature>
<feature type="strand" evidence="49">
    <location>
        <begin position="892"/>
        <end position="894"/>
    </location>
</feature>
<feature type="turn" evidence="49">
    <location>
        <begin position="895"/>
        <end position="898"/>
    </location>
</feature>
<feature type="strand" evidence="49">
    <location>
        <begin position="899"/>
        <end position="902"/>
    </location>
</feature>
<dbReference type="EC" id="3.6.4.12" evidence="16"/>
<dbReference type="EMBL" id="X67334">
    <property type="protein sequence ID" value="CAA47749.1"/>
    <property type="status" value="ALT_SEQ"/>
    <property type="molecule type" value="mRNA"/>
</dbReference>
<dbReference type="EMBL" id="D21063">
    <property type="protein sequence ID" value="BAA04642.1"/>
    <property type="status" value="ALT_INIT"/>
    <property type="molecule type" value="mRNA"/>
</dbReference>
<dbReference type="EMBL" id="AY675259">
    <property type="protein sequence ID" value="AAT70723.1"/>
    <property type="molecule type" value="Genomic_DNA"/>
</dbReference>
<dbReference type="EMBL" id="BC006165">
    <property type="protein sequence ID" value="AAH06165.3"/>
    <property type="molecule type" value="mRNA"/>
</dbReference>
<dbReference type="EMBL" id="BC007670">
    <property type="protein sequence ID" value="AAH07670.2"/>
    <property type="molecule type" value="mRNA"/>
</dbReference>
<dbReference type="EMBL" id="BC007938">
    <property type="protein sequence ID" value="AAH07938.2"/>
    <property type="molecule type" value="mRNA"/>
</dbReference>
<dbReference type="EMBL" id="BC014272">
    <property type="protein sequence ID" value="AAH14272.2"/>
    <property type="molecule type" value="mRNA"/>
</dbReference>
<dbReference type="EMBL" id="BC017258">
    <property type="protein sequence ID" value="AAH17258.2"/>
    <property type="molecule type" value="mRNA"/>
</dbReference>
<dbReference type="EMBL" id="BC017490">
    <property type="protein sequence ID" value="AAH17490.2"/>
    <property type="molecule type" value="mRNA"/>
</dbReference>
<dbReference type="EMBL" id="BC030131">
    <property type="protein sequence ID" value="AAH30131.2"/>
    <property type="molecule type" value="mRNA"/>
</dbReference>
<dbReference type="EMBL" id="D83987">
    <property type="protein sequence ID" value="BAA12177.1"/>
    <property type="status" value="ALT_INIT"/>
    <property type="molecule type" value="mRNA"/>
</dbReference>
<dbReference type="EMBL" id="BT009734">
    <property type="protein sequence ID" value="AAP88736.1"/>
    <property type="molecule type" value="mRNA"/>
</dbReference>
<dbReference type="CCDS" id="CCDS3043.1"/>
<dbReference type="PIR" id="S42228">
    <property type="entry name" value="S42228"/>
</dbReference>
<dbReference type="RefSeq" id="NP_004517.2">
    <property type="nucleotide sequence ID" value="NM_004526.3"/>
</dbReference>
<dbReference type="PDB" id="4UUZ">
    <property type="method" value="X-ray"/>
    <property type="resolution" value="2.90 A"/>
    <property type="chains" value="C=69-138"/>
</dbReference>
<dbReference type="PDB" id="5BNV">
    <property type="method" value="X-ray"/>
    <property type="resolution" value="2.79 A"/>
    <property type="chains" value="C/F=61-130"/>
</dbReference>
<dbReference type="PDB" id="5BNX">
    <property type="method" value="X-ray"/>
    <property type="resolution" value="2.31 A"/>
    <property type="chains" value="C=61-130"/>
</dbReference>
<dbReference type="PDB" id="5BO0">
    <property type="method" value="X-ray"/>
    <property type="resolution" value="2.91 A"/>
    <property type="chains" value="C=61-130"/>
</dbReference>
<dbReference type="PDB" id="5C3I">
    <property type="method" value="X-ray"/>
    <property type="resolution" value="3.50 A"/>
    <property type="chains" value="D/H/L/P/T/X=63-124"/>
</dbReference>
<dbReference type="PDB" id="5JA4">
    <property type="method" value="X-ray"/>
    <property type="resolution" value="2.42 A"/>
    <property type="chains" value="C=61-130"/>
</dbReference>
<dbReference type="PDB" id="6XTX">
    <property type="method" value="EM"/>
    <property type="resolution" value="3.29 A"/>
    <property type="chains" value="2=1-904"/>
</dbReference>
<dbReference type="PDB" id="6XTY">
    <property type="method" value="EM"/>
    <property type="resolution" value="6.77 A"/>
    <property type="chains" value="2=1-904"/>
</dbReference>
<dbReference type="PDB" id="6YA7">
    <property type="method" value="X-ray"/>
    <property type="resolution" value="1.67 A"/>
    <property type="chains" value="C=33-47"/>
</dbReference>
<dbReference type="PDB" id="7CIZ">
    <property type="method" value="X-ray"/>
    <property type="resolution" value="1.80 A"/>
    <property type="chains" value="C/G/K=61-130"/>
</dbReference>
<dbReference type="PDB" id="7CJ0">
    <property type="method" value="X-ray"/>
    <property type="resolution" value="2.50 A"/>
    <property type="chains" value="G/H=61-130"/>
</dbReference>
<dbReference type="PDB" id="7PFO">
    <property type="method" value="EM"/>
    <property type="resolution" value="3.20 A"/>
    <property type="chains" value="2=1-904"/>
</dbReference>
<dbReference type="PDB" id="7PLO">
    <property type="method" value="EM"/>
    <property type="resolution" value="2.80 A"/>
    <property type="chains" value="2=1-904"/>
</dbReference>
<dbReference type="PDB" id="7W1Y">
    <property type="method" value="EM"/>
    <property type="resolution" value="2.59 A"/>
    <property type="chains" value="2/A=1-904"/>
</dbReference>
<dbReference type="PDB" id="7W68">
    <property type="method" value="EM"/>
    <property type="resolution" value="4.40 A"/>
    <property type="chains" value="A=1-904"/>
</dbReference>
<dbReference type="PDB" id="8B9D">
    <property type="method" value="EM"/>
    <property type="resolution" value="3.40 A"/>
    <property type="chains" value="2=1-904"/>
</dbReference>
<dbReference type="PDB" id="8RWV">
    <property type="method" value="EM"/>
    <property type="resolution" value="6.68 A"/>
    <property type="chains" value="2=1-904"/>
</dbReference>
<dbReference type="PDB" id="8S09">
    <property type="method" value="EM"/>
    <property type="resolution" value="3.10 A"/>
    <property type="chains" value="2/A=1-904"/>
</dbReference>
<dbReference type="PDB" id="8S0A">
    <property type="method" value="EM"/>
    <property type="resolution" value="3.20 A"/>
    <property type="chains" value="2=1-904"/>
</dbReference>
<dbReference type="PDB" id="8S0B">
    <property type="method" value="EM"/>
    <property type="resolution" value="3.60 A"/>
    <property type="chains" value="2=1-904"/>
</dbReference>
<dbReference type="PDB" id="8S0D">
    <property type="method" value="EM"/>
    <property type="resolution" value="3.60 A"/>
    <property type="chains" value="2=1-902"/>
</dbReference>
<dbReference type="PDB" id="8S0E">
    <property type="method" value="EM"/>
    <property type="resolution" value="3.80 A"/>
    <property type="chains" value="2=1-904"/>
</dbReference>
<dbReference type="PDB" id="8S0F">
    <property type="method" value="EM"/>
    <property type="resolution" value="4.10 A"/>
    <property type="chains" value="2=1-904"/>
</dbReference>
<dbReference type="PDB" id="8W0E">
    <property type="method" value="EM"/>
    <property type="resolution" value="3.40 A"/>
    <property type="chains" value="2=1-904"/>
</dbReference>
<dbReference type="PDB" id="8W0F">
    <property type="method" value="EM"/>
    <property type="resolution" value="2.80 A"/>
    <property type="chains" value="2/A=1-904"/>
</dbReference>
<dbReference type="PDB" id="8W0G">
    <property type="method" value="EM"/>
    <property type="resolution" value="3.80 A"/>
    <property type="chains" value="2/A=1-904"/>
</dbReference>
<dbReference type="PDB" id="8W0I">
    <property type="method" value="EM"/>
    <property type="resolution" value="3.50 A"/>
    <property type="chains" value="2=1-904"/>
</dbReference>
<dbReference type="PDB" id="8YJF">
    <property type="method" value="X-ray"/>
    <property type="resolution" value="4.40 A"/>
    <property type="chains" value="B=63-154"/>
</dbReference>
<dbReference type="PDB" id="8YJM">
    <property type="method" value="X-ray"/>
    <property type="resolution" value="4.15 A"/>
    <property type="chains" value="B=63-154"/>
</dbReference>
<dbReference type="PDB" id="9CAQ">
    <property type="method" value="EM"/>
    <property type="resolution" value="3.20 A"/>
    <property type="chains" value="2/A=1-904"/>
</dbReference>
<dbReference type="PDBsum" id="4UUZ"/>
<dbReference type="PDBsum" id="5BNV"/>
<dbReference type="PDBsum" id="5BNX"/>
<dbReference type="PDBsum" id="5BO0"/>
<dbReference type="PDBsum" id="5C3I"/>
<dbReference type="PDBsum" id="5JA4"/>
<dbReference type="PDBsum" id="6XTX"/>
<dbReference type="PDBsum" id="6XTY"/>
<dbReference type="PDBsum" id="6YA7"/>
<dbReference type="PDBsum" id="7CIZ"/>
<dbReference type="PDBsum" id="7CJ0"/>
<dbReference type="PDBsum" id="7PFO"/>
<dbReference type="PDBsum" id="7PLO"/>
<dbReference type="PDBsum" id="7W1Y"/>
<dbReference type="PDBsum" id="7W68"/>
<dbReference type="PDBsum" id="8B9D"/>
<dbReference type="PDBsum" id="8RWV"/>
<dbReference type="PDBsum" id="8S09"/>
<dbReference type="PDBsum" id="8S0A"/>
<dbReference type="PDBsum" id="8S0B"/>
<dbReference type="PDBsum" id="8S0D"/>
<dbReference type="PDBsum" id="8S0E"/>
<dbReference type="PDBsum" id="8S0F"/>
<dbReference type="PDBsum" id="8W0E"/>
<dbReference type="PDBsum" id="8W0F"/>
<dbReference type="PDBsum" id="8W0G"/>
<dbReference type="PDBsum" id="8W0I"/>
<dbReference type="PDBsum" id="8YJF"/>
<dbReference type="PDBsum" id="8YJM"/>
<dbReference type="PDBsum" id="9CAQ"/>
<dbReference type="EMDB" id="EMD-10619"/>
<dbReference type="EMDB" id="EMD-10621"/>
<dbReference type="EMDB" id="EMD-13375"/>
<dbReference type="EMDB" id="EMD-13494"/>
<dbReference type="EMDB" id="EMD-19566"/>
<dbReference type="EMDB" id="EMD-19618"/>
<dbReference type="EMDB" id="EMD-19619"/>
<dbReference type="EMDB" id="EMD-19620"/>
<dbReference type="EMDB" id="EMD-19622"/>
<dbReference type="EMDB" id="EMD-19623"/>
<dbReference type="EMDB" id="EMD-19624"/>
<dbReference type="EMDB" id="EMD-32258"/>
<dbReference type="EMDB" id="EMD-32326"/>
<dbReference type="EMDB" id="EMD-43707"/>
<dbReference type="EMDB" id="EMD-43708"/>
<dbReference type="EMDB" id="EMD-43709"/>
<dbReference type="EMDB" id="EMD-43710"/>
<dbReference type="EMDB" id="EMD-45400"/>
<dbReference type="SMR" id="P49736"/>
<dbReference type="BioGRID" id="110339">
    <property type="interactions" value="1093"/>
</dbReference>
<dbReference type="ComplexPortal" id="CPX-2940">
    <property type="entry name" value="MCM complex"/>
</dbReference>
<dbReference type="CORUM" id="P49736"/>
<dbReference type="DIP" id="DIP-31732N"/>
<dbReference type="ELM" id="P49736"/>
<dbReference type="FunCoup" id="P49736">
    <property type="interactions" value="2640"/>
</dbReference>
<dbReference type="IntAct" id="P49736">
    <property type="interactions" value="117"/>
</dbReference>
<dbReference type="MINT" id="P49736"/>
<dbReference type="STRING" id="9606.ENSP00000265056"/>
<dbReference type="ChEMBL" id="CHEMBL3308910"/>
<dbReference type="GlyGen" id="P49736">
    <property type="glycosylation" value="2 sites, 1 O-linked glycan (2 sites)"/>
</dbReference>
<dbReference type="iPTMnet" id="P49736"/>
<dbReference type="MetOSite" id="P49736"/>
<dbReference type="PhosphoSitePlus" id="P49736"/>
<dbReference type="SwissPalm" id="P49736"/>
<dbReference type="BioMuta" id="MCM2"/>
<dbReference type="DMDM" id="41019490"/>
<dbReference type="CPTAC" id="CPTAC-1618"/>
<dbReference type="jPOST" id="P49736"/>
<dbReference type="MassIVE" id="P49736"/>
<dbReference type="PaxDb" id="9606-ENSP00000265056"/>
<dbReference type="PeptideAtlas" id="P49736"/>
<dbReference type="ProteomicsDB" id="56058"/>
<dbReference type="Pumba" id="P49736"/>
<dbReference type="Antibodypedia" id="4369">
    <property type="antibodies" value="1094 antibodies from 43 providers"/>
</dbReference>
<dbReference type="DNASU" id="4171"/>
<dbReference type="Ensembl" id="ENST00000265056.12">
    <property type="protein sequence ID" value="ENSP00000265056.7"/>
    <property type="gene ID" value="ENSG00000073111.15"/>
</dbReference>
<dbReference type="GeneID" id="4171"/>
<dbReference type="KEGG" id="hsa:4171"/>
<dbReference type="MANE-Select" id="ENST00000265056.12">
    <property type="protein sequence ID" value="ENSP00000265056.7"/>
    <property type="RefSeq nucleotide sequence ID" value="NM_004526.4"/>
    <property type="RefSeq protein sequence ID" value="NP_004517.2"/>
</dbReference>
<dbReference type="UCSC" id="uc003ejp.5">
    <property type="organism name" value="human"/>
</dbReference>
<dbReference type="AGR" id="HGNC:6944"/>
<dbReference type="CTD" id="4171"/>
<dbReference type="DisGeNET" id="4171"/>
<dbReference type="GeneCards" id="MCM2"/>
<dbReference type="HGNC" id="HGNC:6944">
    <property type="gene designation" value="MCM2"/>
</dbReference>
<dbReference type="HPA" id="ENSG00000073111">
    <property type="expression patterns" value="Tissue enhanced (bone marrow, lymphoid tissue)"/>
</dbReference>
<dbReference type="MalaCards" id="MCM2"/>
<dbReference type="MIM" id="116945">
    <property type="type" value="gene"/>
</dbReference>
<dbReference type="MIM" id="616968">
    <property type="type" value="phenotype"/>
</dbReference>
<dbReference type="neXtProt" id="NX_P49736"/>
<dbReference type="OpenTargets" id="ENSG00000073111"/>
<dbReference type="Orphanet" id="90635">
    <property type="disease" value="Rare autosomal dominant non-syndromic sensorineural deafness type DFNA"/>
</dbReference>
<dbReference type="PharmGKB" id="PA164742061"/>
<dbReference type="VEuPathDB" id="HostDB:ENSG00000073111"/>
<dbReference type="eggNOG" id="KOG0477">
    <property type="taxonomic scope" value="Eukaryota"/>
</dbReference>
<dbReference type="GeneTree" id="ENSGT01050000244824"/>
<dbReference type="HOGENOM" id="CLU_000995_0_1_1"/>
<dbReference type="InParanoid" id="P49736"/>
<dbReference type="OMA" id="TYERVTT"/>
<dbReference type="OrthoDB" id="844at2759"/>
<dbReference type="PAN-GO" id="P49736">
    <property type="GO annotations" value="8 GO annotations based on evolutionary models"/>
</dbReference>
<dbReference type="PhylomeDB" id="P49736"/>
<dbReference type="TreeFam" id="TF300772"/>
<dbReference type="PathwayCommons" id="P49736"/>
<dbReference type="Reactome" id="R-HSA-176187">
    <property type="pathway name" value="Activation of ATR in response to replication stress"/>
</dbReference>
<dbReference type="Reactome" id="R-HSA-176974">
    <property type="pathway name" value="Unwinding of DNA"/>
</dbReference>
<dbReference type="Reactome" id="R-HSA-68867">
    <property type="pathway name" value="Assembly of the pre-replicative complex"/>
</dbReference>
<dbReference type="Reactome" id="R-HSA-68949">
    <property type="pathway name" value="Orc1 removal from chromatin"/>
</dbReference>
<dbReference type="Reactome" id="R-HSA-68962">
    <property type="pathway name" value="Activation of the pre-replicative complex"/>
</dbReference>
<dbReference type="Reactome" id="R-HSA-69052">
    <property type="pathway name" value="Switching of origins to a post-replicative state"/>
</dbReference>
<dbReference type="Reactome" id="R-HSA-9825895">
    <property type="pathway name" value="Regulation of MITF-M-dependent genes involved in DNA replication, damage repair and senescence"/>
</dbReference>
<dbReference type="SignaLink" id="P49736"/>
<dbReference type="SIGNOR" id="P49736"/>
<dbReference type="BioGRID-ORCS" id="4171">
    <property type="hits" value="835 hits in 1177 CRISPR screens"/>
</dbReference>
<dbReference type="CD-CODE" id="91857CE7">
    <property type="entry name" value="Nucleolus"/>
</dbReference>
<dbReference type="ChiTaRS" id="MCM2">
    <property type="organism name" value="human"/>
</dbReference>
<dbReference type="EvolutionaryTrace" id="P49736"/>
<dbReference type="GeneWiki" id="MCM2"/>
<dbReference type="GenomeRNAi" id="4171"/>
<dbReference type="Pharos" id="P49736">
    <property type="development level" value="Tbio"/>
</dbReference>
<dbReference type="PRO" id="PR:P49736"/>
<dbReference type="Proteomes" id="UP000005640">
    <property type="component" value="Chromosome 3"/>
</dbReference>
<dbReference type="RNAct" id="P49736">
    <property type="molecule type" value="protein"/>
</dbReference>
<dbReference type="Bgee" id="ENSG00000073111">
    <property type="expression patterns" value="Expressed in oocyte and 157 other cell types or tissues"/>
</dbReference>
<dbReference type="ExpressionAtlas" id="P49736">
    <property type="expression patterns" value="baseline and differential"/>
</dbReference>
<dbReference type="GO" id="GO:0000785">
    <property type="term" value="C:chromatin"/>
    <property type="evidence" value="ECO:0000314"/>
    <property type="project" value="UniProtKB"/>
</dbReference>
<dbReference type="GO" id="GO:0000781">
    <property type="term" value="C:chromosome, telomeric region"/>
    <property type="evidence" value="ECO:0007005"/>
    <property type="project" value="BHF-UCL"/>
</dbReference>
<dbReference type="GO" id="GO:0005929">
    <property type="term" value="C:cilium"/>
    <property type="evidence" value="ECO:0000314"/>
    <property type="project" value="HPA"/>
</dbReference>
<dbReference type="GO" id="GO:0071162">
    <property type="term" value="C:CMG complex"/>
    <property type="evidence" value="ECO:0000353"/>
    <property type="project" value="ComplexPortal"/>
</dbReference>
<dbReference type="GO" id="GO:0005737">
    <property type="term" value="C:cytoplasm"/>
    <property type="evidence" value="ECO:0000314"/>
    <property type="project" value="UniProtKB"/>
</dbReference>
<dbReference type="GO" id="GO:0005829">
    <property type="term" value="C:cytosol"/>
    <property type="evidence" value="ECO:0000314"/>
    <property type="project" value="HPA"/>
</dbReference>
<dbReference type="GO" id="GO:0043231">
    <property type="term" value="C:intracellular membrane-bounded organelle"/>
    <property type="evidence" value="ECO:0000314"/>
    <property type="project" value="HPA"/>
</dbReference>
<dbReference type="GO" id="GO:0042555">
    <property type="term" value="C:MCM complex"/>
    <property type="evidence" value="ECO:0000314"/>
    <property type="project" value="UniProtKB"/>
</dbReference>
<dbReference type="GO" id="GO:0005664">
    <property type="term" value="C:nuclear origin of replication recognition complex"/>
    <property type="evidence" value="ECO:0007669"/>
    <property type="project" value="Ensembl"/>
</dbReference>
<dbReference type="GO" id="GO:0005654">
    <property type="term" value="C:nucleoplasm"/>
    <property type="evidence" value="ECO:0000314"/>
    <property type="project" value="HPA"/>
</dbReference>
<dbReference type="GO" id="GO:0005634">
    <property type="term" value="C:nucleus"/>
    <property type="evidence" value="ECO:0000314"/>
    <property type="project" value="UniProtKB"/>
</dbReference>
<dbReference type="GO" id="GO:0005524">
    <property type="term" value="F:ATP binding"/>
    <property type="evidence" value="ECO:0007669"/>
    <property type="project" value="UniProtKB-KW"/>
</dbReference>
<dbReference type="GO" id="GO:0016887">
    <property type="term" value="F:ATP hydrolysis activity"/>
    <property type="evidence" value="ECO:0007669"/>
    <property type="project" value="RHEA"/>
</dbReference>
<dbReference type="GO" id="GO:0003677">
    <property type="term" value="F:DNA binding"/>
    <property type="evidence" value="ECO:0000304"/>
    <property type="project" value="ProtInc"/>
</dbReference>
<dbReference type="GO" id="GO:0003678">
    <property type="term" value="F:DNA helicase activity"/>
    <property type="evidence" value="ECO:0007669"/>
    <property type="project" value="Ensembl"/>
</dbReference>
<dbReference type="GO" id="GO:0003688">
    <property type="term" value="F:DNA replication origin binding"/>
    <property type="evidence" value="ECO:0007669"/>
    <property type="project" value="Ensembl"/>
</dbReference>
<dbReference type="GO" id="GO:0019899">
    <property type="term" value="F:enzyme binding"/>
    <property type="evidence" value="ECO:0007669"/>
    <property type="project" value="Ensembl"/>
</dbReference>
<dbReference type="GO" id="GO:0042393">
    <property type="term" value="F:histone binding"/>
    <property type="evidence" value="ECO:0000353"/>
    <property type="project" value="DisProt"/>
</dbReference>
<dbReference type="GO" id="GO:0003697">
    <property type="term" value="F:single-stranded DNA binding"/>
    <property type="evidence" value="ECO:0000318"/>
    <property type="project" value="GO_Central"/>
</dbReference>
<dbReference type="GO" id="GO:0008270">
    <property type="term" value="F:zinc ion binding"/>
    <property type="evidence" value="ECO:0007669"/>
    <property type="project" value="UniProtKB-KW"/>
</dbReference>
<dbReference type="GO" id="GO:0006915">
    <property type="term" value="P:apoptotic process"/>
    <property type="evidence" value="ECO:0000315"/>
    <property type="project" value="UniProtKB"/>
</dbReference>
<dbReference type="GO" id="GO:0071353">
    <property type="term" value="P:cellular response to interleukin-4"/>
    <property type="evidence" value="ECO:0007669"/>
    <property type="project" value="Ensembl"/>
</dbReference>
<dbReference type="GO" id="GO:0090102">
    <property type="term" value="P:cochlea development"/>
    <property type="evidence" value="ECO:0000315"/>
    <property type="project" value="UniProtKB"/>
</dbReference>
<dbReference type="GO" id="GO:0006260">
    <property type="term" value="P:DNA replication"/>
    <property type="evidence" value="ECO:0000318"/>
    <property type="project" value="GO_Central"/>
</dbReference>
<dbReference type="GO" id="GO:0006270">
    <property type="term" value="P:DNA replication initiation"/>
    <property type="evidence" value="ECO:0000315"/>
    <property type="project" value="UniProtKB"/>
</dbReference>
<dbReference type="GO" id="GO:0000727">
    <property type="term" value="P:double-strand break repair via break-induced replication"/>
    <property type="evidence" value="ECO:0000318"/>
    <property type="project" value="GO_Central"/>
</dbReference>
<dbReference type="GO" id="GO:1902975">
    <property type="term" value="P:mitotic DNA replication initiation"/>
    <property type="evidence" value="ECO:0000318"/>
    <property type="project" value="GO_Central"/>
</dbReference>
<dbReference type="GO" id="GO:0006334">
    <property type="term" value="P:nucleosome assembly"/>
    <property type="evidence" value="ECO:0007669"/>
    <property type="project" value="Ensembl"/>
</dbReference>
<dbReference type="GO" id="GO:0030174">
    <property type="term" value="P:regulation of DNA-templated DNA replication initiation"/>
    <property type="evidence" value="ECO:0000303"/>
    <property type="project" value="ComplexPortal"/>
</dbReference>
<dbReference type="CDD" id="cd17753">
    <property type="entry name" value="MCM2"/>
    <property type="match status" value="1"/>
</dbReference>
<dbReference type="DisProt" id="DP01977"/>
<dbReference type="FunFam" id="2.20.28.10:FF:000002">
    <property type="entry name" value="DNA helicase"/>
    <property type="match status" value="1"/>
</dbReference>
<dbReference type="FunFam" id="3.30.1640.10:FF:000005">
    <property type="entry name" value="DNA helicase"/>
    <property type="match status" value="1"/>
</dbReference>
<dbReference type="FunFam" id="3.40.50.300:FF:000138">
    <property type="entry name" value="DNA helicase"/>
    <property type="match status" value="1"/>
</dbReference>
<dbReference type="Gene3D" id="2.20.28.10">
    <property type="match status" value="1"/>
</dbReference>
<dbReference type="Gene3D" id="3.30.1640.10">
    <property type="entry name" value="mini-chromosome maintenance (MCM) complex, chain A, domain 1"/>
    <property type="match status" value="1"/>
</dbReference>
<dbReference type="Gene3D" id="2.40.50.140">
    <property type="entry name" value="Nucleic acid-binding proteins"/>
    <property type="match status" value="1"/>
</dbReference>
<dbReference type="Gene3D" id="3.40.50.300">
    <property type="entry name" value="P-loop containing nucleotide triphosphate hydrolases"/>
    <property type="match status" value="1"/>
</dbReference>
<dbReference type="IDEAL" id="IID00715"/>
<dbReference type="InterPro" id="IPR031327">
    <property type="entry name" value="MCM"/>
</dbReference>
<dbReference type="InterPro" id="IPR008045">
    <property type="entry name" value="MCM2"/>
</dbReference>
<dbReference type="InterPro" id="IPR018525">
    <property type="entry name" value="MCM_CS"/>
</dbReference>
<dbReference type="InterPro" id="IPR001208">
    <property type="entry name" value="MCM_dom"/>
</dbReference>
<dbReference type="InterPro" id="IPR041562">
    <property type="entry name" value="MCM_lid"/>
</dbReference>
<dbReference type="InterPro" id="IPR027925">
    <property type="entry name" value="MCM_N"/>
</dbReference>
<dbReference type="InterPro" id="IPR033762">
    <property type="entry name" value="MCM_OB"/>
</dbReference>
<dbReference type="InterPro" id="IPR012340">
    <property type="entry name" value="NA-bd_OB-fold"/>
</dbReference>
<dbReference type="InterPro" id="IPR027417">
    <property type="entry name" value="P-loop_NTPase"/>
</dbReference>
<dbReference type="PANTHER" id="PTHR11630">
    <property type="entry name" value="DNA REPLICATION LICENSING FACTOR MCM FAMILY MEMBER"/>
    <property type="match status" value="1"/>
</dbReference>
<dbReference type="PANTHER" id="PTHR11630:SF44">
    <property type="entry name" value="DNA REPLICATION LICENSING FACTOR MCM2"/>
    <property type="match status" value="1"/>
</dbReference>
<dbReference type="Pfam" id="PF00493">
    <property type="entry name" value="MCM"/>
    <property type="match status" value="1"/>
</dbReference>
<dbReference type="Pfam" id="PF12619">
    <property type="entry name" value="MCM2_N"/>
    <property type="match status" value="1"/>
</dbReference>
<dbReference type="Pfam" id="PF17855">
    <property type="entry name" value="MCM_lid"/>
    <property type="match status" value="1"/>
</dbReference>
<dbReference type="Pfam" id="PF14551">
    <property type="entry name" value="MCM_N"/>
    <property type="match status" value="1"/>
</dbReference>
<dbReference type="Pfam" id="PF17207">
    <property type="entry name" value="MCM_OB"/>
    <property type="match status" value="1"/>
</dbReference>
<dbReference type="Pfam" id="PF23669">
    <property type="entry name" value="WH_MCM2"/>
    <property type="match status" value="1"/>
</dbReference>
<dbReference type="PRINTS" id="PR01657">
    <property type="entry name" value="MCMFAMILY"/>
</dbReference>
<dbReference type="PRINTS" id="PR01658">
    <property type="entry name" value="MCMPROTEIN2"/>
</dbReference>
<dbReference type="SMART" id="SM00350">
    <property type="entry name" value="MCM"/>
    <property type="match status" value="1"/>
</dbReference>
<dbReference type="SUPFAM" id="SSF50249">
    <property type="entry name" value="Nucleic acid-binding proteins"/>
    <property type="match status" value="1"/>
</dbReference>
<dbReference type="SUPFAM" id="SSF52540">
    <property type="entry name" value="P-loop containing nucleoside triphosphate hydrolases"/>
    <property type="match status" value="1"/>
</dbReference>
<dbReference type="PROSITE" id="PS00847">
    <property type="entry name" value="MCM_1"/>
    <property type="match status" value="1"/>
</dbReference>
<dbReference type="PROSITE" id="PS50051">
    <property type="entry name" value="MCM_2"/>
    <property type="match status" value="1"/>
</dbReference>
<sequence>MAESSESFTMASSPAQRRRGNDPLTSSPGRSSRRTDALTSSPGRDLPPFEDESEGLLGTEGPLEEEEDGEELIGDGMERDYRAIPELDAYEAEGLALDDEDVEELTASQREAAERAMRQRDREAGRGLGRMRRGLLYDSDEEDEERPARKRRQVERATEDGEEDEEMIESIENLEDLKGHSVREWVSMAGPRLEIHHRFKNFLRTHVDSHGHNVFKERISDMCKENRESLVVNYEDLAAREHVLAYFLPEAPAELLQIFDEAALEVVLAMYPKYDRITNHIHVRISHLPLVEELRSLRQLHLNQLIRTSGVVTSCTGVLPQLSMVKYNCNKCNFVLGPFCQSQNQEVKPGSCPECQSAGPFEVNMEETIYQNYQRIRIQESPGKVAAGRLPRSKDAILLADLVDSCKPGDEIELTGIYHNNYDGSLNTANGFPVFATVILANHVAKKDNKVAVGELTDEDVKMITSLSKDQQIGEKIFASIAPSIYGHEDIKRGLALALFGGEPKNPGGKHKVRGDINVLLCGDPGTAKSQFLKYIEKVSSRAIFTTGQGASAVGLTAYVQRHPVSREWTLEAGALVLADRGVCLIDEFDKMNDQDRTSIHEAMEQQSISISKAGIVTSLQARCTVIAAANPIGGRYDPSLTFSENVDLTEPIISRFDILCVVRDTVDPVQDEMLARFVVGSHVRHHPSNKEEEGLANGSAAEPAMPNTYGVEPLPQEVLKKYIIYAKERVHPKLNQMDQDKVAKMYSDLRKESMATGSIPITVRHIESMIRMAEAHARIHLRDYVIEDDVNMAIRVMLESFIDTQKFSVMRSMRKTFARYLSFRRDNNELLLFILKQLVAEQVTYQRNRFGAQQDTIEVPEKDLVDKARQINIHNLSAFYDSELFRMNKFSHDLKRKMILQQF</sequence>
<protein>
    <recommendedName>
        <fullName evidence="25">DNA replication licensing factor MCM2</fullName>
        <ecNumber evidence="16">3.6.4.12</ecNumber>
    </recommendedName>
    <alternativeName>
        <fullName>Minichromosome maintenance protein 2 homolog</fullName>
    </alternativeName>
    <alternativeName>
        <fullName>Nuclear protein BM28</fullName>
    </alternativeName>
</protein>
<accession>P49736</accession>
<accession>Q14577</accession>
<accession>Q15023</accession>
<accession>Q8N2V1</accession>
<accession>Q969W7</accession>
<accession>Q96AE1</accession>
<accession>Q9BRM7</accession>
<gene>
    <name evidence="27" type="primary">MCM2</name>
    <name type="synonym">BM28</name>
    <name type="synonym">CCNL1</name>
    <name type="synonym">CDCL1</name>
    <name type="synonym">KIAA0030</name>
</gene>